<organism>
    <name type="scientific">Homo sapiens</name>
    <name type="common">Human</name>
    <dbReference type="NCBI Taxonomy" id="9606"/>
    <lineage>
        <taxon>Eukaryota</taxon>
        <taxon>Metazoa</taxon>
        <taxon>Chordata</taxon>
        <taxon>Craniata</taxon>
        <taxon>Vertebrata</taxon>
        <taxon>Euteleostomi</taxon>
        <taxon>Mammalia</taxon>
        <taxon>Eutheria</taxon>
        <taxon>Euarchontoglires</taxon>
        <taxon>Primates</taxon>
        <taxon>Haplorrhini</taxon>
        <taxon>Catarrhini</taxon>
        <taxon>Hominidae</taxon>
        <taxon>Homo</taxon>
    </lineage>
</organism>
<reference key="1">
    <citation type="journal article" date="1986" name="Nature">
        <title>Plasma and cytoplasmic gelsolins are encoded by a single gene and contain a duplicated actin-binding domain.</title>
        <authorList>
            <person name="Kwiatkowski D.J."/>
            <person name="Stossel T.P."/>
            <person name="Orkin S.H."/>
            <person name="Mole J.E."/>
            <person name="Colten H.R."/>
            <person name="Yin H.L."/>
        </authorList>
    </citation>
    <scope>NUCLEOTIDE SEQUENCE [MRNA] (ISOFORMS 1 AND 2)</scope>
    <scope>ALTERNATIVE INITIATION</scope>
</reference>
<reference key="2">
    <citation type="journal article" date="2004" name="Nat. Genet.">
        <title>Complete sequencing and characterization of 21,243 full-length human cDNAs.</title>
        <authorList>
            <person name="Ota T."/>
            <person name="Suzuki Y."/>
            <person name="Nishikawa T."/>
            <person name="Otsuki T."/>
            <person name="Sugiyama T."/>
            <person name="Irie R."/>
            <person name="Wakamatsu A."/>
            <person name="Hayashi K."/>
            <person name="Sato H."/>
            <person name="Nagai K."/>
            <person name="Kimura K."/>
            <person name="Makita H."/>
            <person name="Sekine M."/>
            <person name="Obayashi M."/>
            <person name="Nishi T."/>
            <person name="Shibahara T."/>
            <person name="Tanaka T."/>
            <person name="Ishii S."/>
            <person name="Yamamoto J."/>
            <person name="Saito K."/>
            <person name="Kawai Y."/>
            <person name="Isono Y."/>
            <person name="Nakamura Y."/>
            <person name="Nagahari K."/>
            <person name="Murakami K."/>
            <person name="Yasuda T."/>
            <person name="Iwayanagi T."/>
            <person name="Wagatsuma M."/>
            <person name="Shiratori A."/>
            <person name="Sudo H."/>
            <person name="Hosoiri T."/>
            <person name="Kaku Y."/>
            <person name="Kodaira H."/>
            <person name="Kondo H."/>
            <person name="Sugawara M."/>
            <person name="Takahashi M."/>
            <person name="Kanda K."/>
            <person name="Yokoi T."/>
            <person name="Furuya T."/>
            <person name="Kikkawa E."/>
            <person name="Omura Y."/>
            <person name="Abe K."/>
            <person name="Kamihara K."/>
            <person name="Katsuta N."/>
            <person name="Sato K."/>
            <person name="Tanikawa M."/>
            <person name="Yamazaki M."/>
            <person name="Ninomiya K."/>
            <person name="Ishibashi T."/>
            <person name="Yamashita H."/>
            <person name="Murakawa K."/>
            <person name="Fujimori K."/>
            <person name="Tanai H."/>
            <person name="Kimata M."/>
            <person name="Watanabe M."/>
            <person name="Hiraoka S."/>
            <person name="Chiba Y."/>
            <person name="Ishida S."/>
            <person name="Ono Y."/>
            <person name="Takiguchi S."/>
            <person name="Watanabe S."/>
            <person name="Yosida M."/>
            <person name="Hotuta T."/>
            <person name="Kusano J."/>
            <person name="Kanehori K."/>
            <person name="Takahashi-Fujii A."/>
            <person name="Hara H."/>
            <person name="Tanase T.-O."/>
            <person name="Nomura Y."/>
            <person name="Togiya S."/>
            <person name="Komai F."/>
            <person name="Hara R."/>
            <person name="Takeuchi K."/>
            <person name="Arita M."/>
            <person name="Imose N."/>
            <person name="Musashino K."/>
            <person name="Yuuki H."/>
            <person name="Oshima A."/>
            <person name="Sasaki N."/>
            <person name="Aotsuka S."/>
            <person name="Yoshikawa Y."/>
            <person name="Matsunawa H."/>
            <person name="Ichihara T."/>
            <person name="Shiohata N."/>
            <person name="Sano S."/>
            <person name="Moriya S."/>
            <person name="Momiyama H."/>
            <person name="Satoh N."/>
            <person name="Takami S."/>
            <person name="Terashima Y."/>
            <person name="Suzuki O."/>
            <person name="Nakagawa S."/>
            <person name="Senoh A."/>
            <person name="Mizoguchi H."/>
            <person name="Goto Y."/>
            <person name="Shimizu F."/>
            <person name="Wakebe H."/>
            <person name="Hishigaki H."/>
            <person name="Watanabe T."/>
            <person name="Sugiyama A."/>
            <person name="Takemoto M."/>
            <person name="Kawakami B."/>
            <person name="Yamazaki M."/>
            <person name="Watanabe K."/>
            <person name="Kumagai A."/>
            <person name="Itakura S."/>
            <person name="Fukuzumi Y."/>
            <person name="Fujimori Y."/>
            <person name="Komiyama M."/>
            <person name="Tashiro H."/>
            <person name="Tanigami A."/>
            <person name="Fujiwara T."/>
            <person name="Ono T."/>
            <person name="Yamada K."/>
            <person name="Fujii Y."/>
            <person name="Ozaki K."/>
            <person name="Hirao M."/>
            <person name="Ohmori Y."/>
            <person name="Kawabata A."/>
            <person name="Hikiji T."/>
            <person name="Kobatake N."/>
            <person name="Inagaki H."/>
            <person name="Ikema Y."/>
            <person name="Okamoto S."/>
            <person name="Okitani R."/>
            <person name="Kawakami T."/>
            <person name="Noguchi S."/>
            <person name="Itoh T."/>
            <person name="Shigeta K."/>
            <person name="Senba T."/>
            <person name="Matsumura K."/>
            <person name="Nakajima Y."/>
            <person name="Mizuno T."/>
            <person name="Morinaga M."/>
            <person name="Sasaki M."/>
            <person name="Togashi T."/>
            <person name="Oyama M."/>
            <person name="Hata H."/>
            <person name="Watanabe M."/>
            <person name="Komatsu T."/>
            <person name="Mizushima-Sugano J."/>
            <person name="Satoh T."/>
            <person name="Shirai Y."/>
            <person name="Takahashi Y."/>
            <person name="Nakagawa K."/>
            <person name="Okumura K."/>
            <person name="Nagase T."/>
            <person name="Nomura N."/>
            <person name="Kikuchi H."/>
            <person name="Masuho Y."/>
            <person name="Yamashita R."/>
            <person name="Nakai K."/>
            <person name="Yada T."/>
            <person name="Nakamura Y."/>
            <person name="Ohara O."/>
            <person name="Isogai T."/>
            <person name="Sugano S."/>
        </authorList>
    </citation>
    <scope>NUCLEOTIDE SEQUENCE [LARGE SCALE MRNA] (ISOFORMS 1; 2; 3 AND 4)</scope>
    <source>
        <tissue>Hippocampus</tissue>
        <tissue>Testis</tissue>
        <tissue>Tongue</tissue>
    </source>
</reference>
<reference key="3">
    <citation type="journal article" date="2004" name="Nature">
        <title>DNA sequence and analysis of human chromosome 9.</title>
        <authorList>
            <person name="Humphray S.J."/>
            <person name="Oliver K."/>
            <person name="Hunt A.R."/>
            <person name="Plumb R.W."/>
            <person name="Loveland J.E."/>
            <person name="Howe K.L."/>
            <person name="Andrews T.D."/>
            <person name="Searle S."/>
            <person name="Hunt S.E."/>
            <person name="Scott C.E."/>
            <person name="Jones M.C."/>
            <person name="Ainscough R."/>
            <person name="Almeida J.P."/>
            <person name="Ambrose K.D."/>
            <person name="Ashwell R.I.S."/>
            <person name="Babbage A.K."/>
            <person name="Babbage S."/>
            <person name="Bagguley C.L."/>
            <person name="Bailey J."/>
            <person name="Banerjee R."/>
            <person name="Barker D.J."/>
            <person name="Barlow K.F."/>
            <person name="Bates K."/>
            <person name="Beasley H."/>
            <person name="Beasley O."/>
            <person name="Bird C.P."/>
            <person name="Bray-Allen S."/>
            <person name="Brown A.J."/>
            <person name="Brown J.Y."/>
            <person name="Burford D."/>
            <person name="Burrill W."/>
            <person name="Burton J."/>
            <person name="Carder C."/>
            <person name="Carter N.P."/>
            <person name="Chapman J.C."/>
            <person name="Chen Y."/>
            <person name="Clarke G."/>
            <person name="Clark S.Y."/>
            <person name="Clee C.M."/>
            <person name="Clegg S."/>
            <person name="Collier R.E."/>
            <person name="Corby N."/>
            <person name="Crosier M."/>
            <person name="Cummings A.T."/>
            <person name="Davies J."/>
            <person name="Dhami P."/>
            <person name="Dunn M."/>
            <person name="Dutta I."/>
            <person name="Dyer L.W."/>
            <person name="Earthrowl M.E."/>
            <person name="Faulkner L."/>
            <person name="Fleming C.J."/>
            <person name="Frankish A."/>
            <person name="Frankland J.A."/>
            <person name="French L."/>
            <person name="Fricker D.G."/>
            <person name="Garner P."/>
            <person name="Garnett J."/>
            <person name="Ghori J."/>
            <person name="Gilbert J.G.R."/>
            <person name="Glison C."/>
            <person name="Grafham D.V."/>
            <person name="Gribble S."/>
            <person name="Griffiths C."/>
            <person name="Griffiths-Jones S."/>
            <person name="Grocock R."/>
            <person name="Guy J."/>
            <person name="Hall R.E."/>
            <person name="Hammond S."/>
            <person name="Harley J.L."/>
            <person name="Harrison E.S.I."/>
            <person name="Hart E.A."/>
            <person name="Heath P.D."/>
            <person name="Henderson C.D."/>
            <person name="Hopkins B.L."/>
            <person name="Howard P.J."/>
            <person name="Howden P.J."/>
            <person name="Huckle E."/>
            <person name="Johnson C."/>
            <person name="Johnson D."/>
            <person name="Joy A.A."/>
            <person name="Kay M."/>
            <person name="Keenan S."/>
            <person name="Kershaw J.K."/>
            <person name="Kimberley A.M."/>
            <person name="King A."/>
            <person name="Knights A."/>
            <person name="Laird G.K."/>
            <person name="Langford C."/>
            <person name="Lawlor S."/>
            <person name="Leongamornlert D.A."/>
            <person name="Leversha M."/>
            <person name="Lloyd C."/>
            <person name="Lloyd D.M."/>
            <person name="Lovell J."/>
            <person name="Martin S."/>
            <person name="Mashreghi-Mohammadi M."/>
            <person name="Matthews L."/>
            <person name="McLaren S."/>
            <person name="McLay K.E."/>
            <person name="McMurray A."/>
            <person name="Milne S."/>
            <person name="Nickerson T."/>
            <person name="Nisbett J."/>
            <person name="Nordsiek G."/>
            <person name="Pearce A.V."/>
            <person name="Peck A.I."/>
            <person name="Porter K.M."/>
            <person name="Pandian R."/>
            <person name="Pelan S."/>
            <person name="Phillimore B."/>
            <person name="Povey S."/>
            <person name="Ramsey Y."/>
            <person name="Rand V."/>
            <person name="Scharfe M."/>
            <person name="Sehra H.K."/>
            <person name="Shownkeen R."/>
            <person name="Sims S.K."/>
            <person name="Skuce C.D."/>
            <person name="Smith M."/>
            <person name="Steward C.A."/>
            <person name="Swarbreck D."/>
            <person name="Sycamore N."/>
            <person name="Tester J."/>
            <person name="Thorpe A."/>
            <person name="Tracey A."/>
            <person name="Tromans A."/>
            <person name="Thomas D.W."/>
            <person name="Wall M."/>
            <person name="Wallis J.M."/>
            <person name="West A.P."/>
            <person name="Whitehead S.L."/>
            <person name="Willey D.L."/>
            <person name="Williams S.A."/>
            <person name="Wilming L."/>
            <person name="Wray P.W."/>
            <person name="Young L."/>
            <person name="Ashurst J.L."/>
            <person name="Coulson A."/>
            <person name="Blocker H."/>
            <person name="Durbin R.M."/>
            <person name="Sulston J.E."/>
            <person name="Hubbard T."/>
            <person name="Jackson M.J."/>
            <person name="Bentley D.R."/>
            <person name="Beck S."/>
            <person name="Rogers J."/>
            <person name="Dunham I."/>
        </authorList>
    </citation>
    <scope>NUCLEOTIDE SEQUENCE [LARGE SCALE GENOMIC DNA]</scope>
</reference>
<reference key="4">
    <citation type="submission" date="2005-07" db="EMBL/GenBank/DDBJ databases">
        <authorList>
            <person name="Mural R.J."/>
            <person name="Istrail S."/>
            <person name="Sutton G."/>
            <person name="Florea L."/>
            <person name="Halpern A.L."/>
            <person name="Mobarry C.M."/>
            <person name="Lippert R."/>
            <person name="Walenz B."/>
            <person name="Shatkay H."/>
            <person name="Dew I."/>
            <person name="Miller J.R."/>
            <person name="Flanigan M.J."/>
            <person name="Edwards N.J."/>
            <person name="Bolanos R."/>
            <person name="Fasulo D."/>
            <person name="Halldorsson B.V."/>
            <person name="Hannenhalli S."/>
            <person name="Turner R."/>
            <person name="Yooseph S."/>
            <person name="Lu F."/>
            <person name="Nusskern D.R."/>
            <person name="Shue B.C."/>
            <person name="Zheng X.H."/>
            <person name="Zhong F."/>
            <person name="Delcher A.L."/>
            <person name="Huson D.H."/>
            <person name="Kravitz S.A."/>
            <person name="Mouchard L."/>
            <person name="Reinert K."/>
            <person name="Remington K.A."/>
            <person name="Clark A.G."/>
            <person name="Waterman M.S."/>
            <person name="Eichler E.E."/>
            <person name="Adams M.D."/>
            <person name="Hunkapiller M.W."/>
            <person name="Myers E.W."/>
            <person name="Venter J.C."/>
        </authorList>
    </citation>
    <scope>NUCLEOTIDE SEQUENCE [LARGE SCALE GENOMIC DNA]</scope>
</reference>
<reference key="5">
    <citation type="journal article" date="2004" name="Genome Res.">
        <title>The status, quality, and expansion of the NIH full-length cDNA project: the Mammalian Gene Collection (MGC).</title>
        <authorList>
            <consortium name="The MGC Project Team"/>
        </authorList>
    </citation>
    <scope>NUCLEOTIDE SEQUENCE [LARGE SCALE MRNA] (ISOFORM 1)</scope>
    <source>
        <tissue>Colon</tissue>
        <tissue>Pancreas</tissue>
    </source>
</reference>
<reference key="6">
    <citation type="journal article" date="2003" name="Nat. Biotechnol.">
        <title>Exploring proteomes and analyzing protein processing by mass spectrometric identification of sorted N-terminal peptides.</title>
        <authorList>
            <person name="Gevaert K."/>
            <person name="Goethals M."/>
            <person name="Martens L."/>
            <person name="Van Damme J."/>
            <person name="Staes A."/>
            <person name="Thomas G.R."/>
            <person name="Vandekerckhove J."/>
        </authorList>
    </citation>
    <scope>PROTEIN SEQUENCE OF 53-72 (ISOFORM 2)</scope>
    <source>
        <tissue>Platelet</tissue>
    </source>
</reference>
<reference key="7">
    <citation type="journal article" date="1984" name="J. Biol. Chem.">
        <title>Human plasma gelsolin binds to fibronectin.</title>
        <authorList>
            <person name="Lind S.E."/>
            <person name="Janmey P.A."/>
        </authorList>
    </citation>
    <scope>INTERACTION WITH FIBRONECTIN</scope>
</reference>
<reference key="8">
    <citation type="journal article" date="1990" name="Biochem. Biophys. Res. Commun.">
        <title>Amyloid protein in familial amyloidosis (Finnish type) is homologous to gelsolin, an actin-binding protein.</title>
        <authorList>
            <person name="Haltia M."/>
            <person name="Prelli F."/>
            <person name="Ghiso J."/>
            <person name="Kiuru S."/>
            <person name="Sommer H."/>
            <person name="Palo J."/>
            <person name="Frangione B."/>
        </authorList>
    </citation>
    <scope>IDENTITY OF AMYLD4 AMYLOID PROTEIN WITH GELSOLIN</scope>
</reference>
<reference key="9">
    <citation type="journal article" date="1990" name="FEBS Lett.">
        <title>Finnish hereditary amyloidosis. Amino acid sequence homology between the amyloid fibril protein and human plasma gelsoline.</title>
        <authorList>
            <person name="Maury C.P.J."/>
            <person name="Alli K."/>
            <person name="Baumann M."/>
        </authorList>
    </citation>
    <scope>IDENTITY OF AMYLD4 AMYLOID PROTEIN WITH GELSOLIN</scope>
</reference>
<reference key="10">
    <citation type="journal article" date="1996" name="Biochemistry">
        <title>The plasma and cytoplasmic forms of human gelsolin differ in disulfide structure.</title>
        <authorList>
            <person name="Wen D."/>
            <person name="Corina K."/>
            <person name="Chow E.P."/>
            <person name="Miller S."/>
            <person name="Janmey P.A."/>
            <person name="Pepinsky R.B."/>
        </authorList>
    </citation>
    <scope>DISULFIDE BOND</scope>
</reference>
<reference key="11">
    <citation type="journal article" date="1997" name="FEBS Lett.">
        <title>Functional consequences of disulfide bond formation in gelsolin.</title>
        <authorList>
            <person name="Allen P.G."/>
        </authorList>
    </citation>
    <scope>DISULFIDE BOND</scope>
</reference>
<reference key="12">
    <citation type="journal article" date="1999" name="Protein Sci.">
        <title>Identification of Tyr438 as the major in vitro c-Src phosphorylation site in human gelsolin: a mass spectrometric approach.</title>
        <authorList>
            <person name="De Corte V."/>
            <person name="Demol H."/>
            <person name="Goethals M."/>
            <person name="Van Damme J."/>
            <person name="Gettemans J."/>
            <person name="Vandekerckhove J."/>
        </authorList>
    </citation>
    <scope>PHOSPHORYLATION AT TYR-86; TYR-409; TYR-465; TYR-603 AND TYR-651</scope>
</reference>
<reference key="13">
    <citation type="journal article" date="2010" name="Nature">
        <title>Functional genomic screen for modulators of ciliogenesis and cilium length.</title>
        <authorList>
            <person name="Kim J."/>
            <person name="Lee J.E."/>
            <person name="Heynen-Genel S."/>
            <person name="Suyama E."/>
            <person name="Ono K."/>
            <person name="Lee K."/>
            <person name="Ideker T."/>
            <person name="Aza-Blanc P."/>
            <person name="Gleeson J.G."/>
        </authorList>
    </citation>
    <scope>FUNCTION</scope>
</reference>
<reference key="14">
    <citation type="journal article" date="2011" name="BMC Syst. Biol.">
        <title>Initial characterization of the human central proteome.</title>
        <authorList>
            <person name="Burkard T.R."/>
            <person name="Planyavsky M."/>
            <person name="Kaupe I."/>
            <person name="Breitwieser F.P."/>
            <person name="Buerckstuemmer T."/>
            <person name="Bennett K.L."/>
            <person name="Superti-Furga G."/>
            <person name="Colinge J."/>
        </authorList>
    </citation>
    <scope>IDENTIFICATION BY MASS SPECTROMETRY [LARGE SCALE ANALYSIS]</scope>
</reference>
<reference key="15">
    <citation type="journal article" date="2013" name="J. Proteome Res.">
        <title>Toward a comprehensive characterization of a human cancer cell phosphoproteome.</title>
        <authorList>
            <person name="Zhou H."/>
            <person name="Di Palma S."/>
            <person name="Preisinger C."/>
            <person name="Peng M."/>
            <person name="Polat A.N."/>
            <person name="Heck A.J."/>
            <person name="Mohammed S."/>
        </authorList>
    </citation>
    <scope>PHOSPHORYLATION [LARGE SCALE ANALYSIS] AT THR-742</scope>
    <scope>IDENTIFICATION BY MASS SPECTROMETRY [LARGE SCALE ANALYSIS]</scope>
    <source>
        <tissue>Cervix carcinoma</tissue>
    </source>
</reference>
<reference key="16">
    <citation type="journal article" date="2014" name="J. Proteomics">
        <title>An enzyme assisted RP-RPLC approach for in-depth analysis of human liver phosphoproteome.</title>
        <authorList>
            <person name="Bian Y."/>
            <person name="Song C."/>
            <person name="Cheng K."/>
            <person name="Dong M."/>
            <person name="Wang F."/>
            <person name="Huang J."/>
            <person name="Sun D."/>
            <person name="Wang L."/>
            <person name="Ye M."/>
            <person name="Zou H."/>
        </authorList>
    </citation>
    <scope>IDENTIFICATION BY MASS SPECTROMETRY [LARGE SCALE ANALYSIS]</scope>
    <source>
        <tissue>Liver</tissue>
    </source>
</reference>
<reference evidence="19" key="17">
    <citation type="journal article" date="1993" name="Nature">
        <title>Structure of gelsolin segment 1-actin complex and the mechanism of filament severing.</title>
        <authorList>
            <person name="McLaughlin P.J."/>
            <person name="Gooch J.T."/>
            <person name="Mannherz H.-G."/>
            <person name="Weeds A.G."/>
        </authorList>
    </citation>
    <scope>X-RAY CRYSTALLOGRAPHY (2.5 ANGSTROMS) OF 28-503</scope>
</reference>
<reference evidence="21" key="18">
    <citation type="journal article" date="1995" name="Biophys. J.">
        <title>Spectroscopic studies of a phosphoinositide-binding peptide from gelsolin: behavior in solutions of mixed solvent and anionic micelles.</title>
        <authorList>
            <person name="Xian W."/>
            <person name="Vegners R."/>
            <person name="Janmey P.A."/>
            <person name="Braunlin W.H."/>
        </authorList>
    </citation>
    <scope>STRUCTURE BY NMR OF 177-196</scope>
    <scope>DOMAIN</scope>
</reference>
<reference evidence="20" key="19">
    <citation type="journal article" date="2002" name="J. Mol. Biol.">
        <title>The calcium activation of gelsolin: insights from the 3A structure of the G4-G6/actin complex.</title>
        <authorList>
            <person name="Choe H."/>
            <person name="Burtnick L.D."/>
            <person name="Mejillano M."/>
            <person name="Yin H.L."/>
            <person name="Robinson R.C."/>
            <person name="Choe S."/>
        </authorList>
    </citation>
    <scope>X-RAY CRYSTALLOGRAPHY (2.99 ANGSTROMS) OF 439-769 IN COMPLEX WITH ACTIN AND CALCIUM</scope>
    <scope>DOMAIN</scope>
</reference>
<reference evidence="22 23 24 25" key="20">
    <citation type="journal article" date="2006" name="J. Mol. Biol.">
        <title>Calcium ion exchange in crystalline gelsolin.</title>
        <authorList>
            <person name="Chumnarnsilpa S."/>
            <person name="Loonchanta A."/>
            <person name="Xue B."/>
            <person name="Choe H."/>
            <person name="Urosev D."/>
            <person name="Wang H."/>
            <person name="Lindberg U."/>
            <person name="Burtnick L.D."/>
            <person name="Robinson R.C."/>
        </authorList>
    </citation>
    <scope>X-RAY CRYSTALLOGRAPHY (1.55 ANGSTROMS) OF 439-782</scope>
    <scope>CALCIUM-BINDING SITES</scope>
</reference>
<reference evidence="26 27" key="21">
    <citation type="journal article" date="2009" name="Proc. Natl. Acad. Sci. U.S.A.">
        <title>Ca2+ binding by domain 2 plays a critical role in the activation and stabilization of gelsolin.</title>
        <authorList>
            <person name="Nag S."/>
            <person name="Ma Q."/>
            <person name="Wang H."/>
            <person name="Chumnarnsilpa S."/>
            <person name="Lee W.L."/>
            <person name="Larsson M."/>
            <person name="Kannan B."/>
            <person name="Hernandez-Valladares M."/>
            <person name="Burtnick L.D."/>
            <person name="Robinson R.C."/>
        </authorList>
    </citation>
    <scope>X-RAY CRYSTALLOGRAPHY (3.00 ANGSTROMS) IN COMPLEX WITH ACTIN AND CALCIUM</scope>
    <scope>FUNCTION</scope>
    <scope>DOMAIN</scope>
    <scope>DISULFIDE BOND</scope>
    <scope>CHARACTERIZATION OF VARIANT AMYLD4 ASN-214</scope>
    <scope>MUTAGENESIS OF GLU-236; ASP-697 AND GLU-719</scope>
</reference>
<reference evidence="28" key="22">
    <citation type="journal article" date="2012" name="Biophys. J.">
        <title>Structural states and dynamics of the D-loop in actin.</title>
        <authorList>
            <person name="Durer Z.A."/>
            <person name="Kudryashov D.S."/>
            <person name="Sawaya M.R."/>
            <person name="Altenbach C."/>
            <person name="Hubbell W."/>
            <person name="Reisler E."/>
        </authorList>
    </citation>
    <scope>X-RAY CRYSTALLOGRAPHY (3.0 ANGSTROMS) OF 53-174 IN COMPLEX WITH ACTA1; COBL AND TMSB4X</scope>
    <scope>SUBUNIT</scope>
</reference>
<reference key="23">
    <citation type="journal article" date="1990" name="Biochem. J.">
        <title>Gelsolin variant (Asn-187) in familial amyloidosis, Finnish type.</title>
        <authorList>
            <person name="Ghiso J."/>
            <person name="Haltia M."/>
            <person name="Prelli F."/>
            <person name="Novello J."/>
            <person name="Frangione B."/>
        </authorList>
    </citation>
    <scope>VARIANT AMYLD4 ASN-214</scope>
    <scope>INVOLVEMENT IN AMYLD4</scope>
</reference>
<reference key="24">
    <citation type="journal article" date="1992" name="Nat. Genet.">
        <title>Gelsolin-derived familial amyloidosis caused by asparagine or tyrosine substitution for aspartic acid at residue 187.</title>
        <authorList>
            <person name="de la Chapelle A."/>
            <person name="Tolvanen R."/>
            <person name="Boysen G."/>
            <person name="Santavy J."/>
            <person name="Bleeker-Wagemakers L."/>
            <person name="Maury C.P.J."/>
            <person name="Kere J."/>
        </authorList>
    </citation>
    <scope>VARIANTS AMYLD4 ASN-214 AND TYR-214</scope>
    <scope>INVOLVEMENT IN AMYLD4</scope>
</reference>
<reference key="25">
    <citation type="journal article" date="2006" name="Science">
        <title>The consensus coding sequences of human breast and colorectal cancers.</title>
        <authorList>
            <person name="Sjoeblom T."/>
            <person name="Jones S."/>
            <person name="Wood L.D."/>
            <person name="Parsons D.W."/>
            <person name="Lin J."/>
            <person name="Barber T.D."/>
            <person name="Mandelker D."/>
            <person name="Leary R.J."/>
            <person name="Ptak J."/>
            <person name="Silliman N."/>
            <person name="Szabo S."/>
            <person name="Buckhaults P."/>
            <person name="Farrell C."/>
            <person name="Meeh P."/>
            <person name="Markowitz S.D."/>
            <person name="Willis J."/>
            <person name="Dawson D."/>
            <person name="Willson J.K.V."/>
            <person name="Gazdar A.F."/>
            <person name="Hartigan J."/>
            <person name="Wu L."/>
            <person name="Liu C."/>
            <person name="Parmigiani G."/>
            <person name="Park B.H."/>
            <person name="Bachman K.E."/>
            <person name="Papadopoulos N."/>
            <person name="Vogelstein B."/>
            <person name="Kinzler K.W."/>
            <person name="Velculescu V.E."/>
        </authorList>
    </citation>
    <scope>VARIANTS [LARGE SCALE ANALYSIS] LEU-22; ILE-201 AND ASN-611</scope>
</reference>
<protein>
    <recommendedName>
        <fullName>Gelsolin</fullName>
    </recommendedName>
    <alternativeName>
        <fullName>AGEL</fullName>
    </alternativeName>
    <alternativeName>
        <fullName>Actin-depolymerizing factor</fullName>
        <shortName>ADF</shortName>
    </alternativeName>
    <alternativeName>
        <fullName>Brevin</fullName>
    </alternativeName>
</protein>
<accession>P06396</accession>
<accession>A2A418</accession>
<accession>A8MUD1</accession>
<accession>A8MYN7</accession>
<accession>B7Z373</accession>
<accession>B7Z5V1</accession>
<accession>F5H1A8</accession>
<accession>Q5T0I2</accession>
<accession>Q8WVV7</accession>
<proteinExistence type="evidence at protein level"/>
<evidence type="ECO:0000250" key="1"/>
<evidence type="ECO:0000250" key="2">
    <source>
        <dbReference type="UniProtKB" id="P13020"/>
    </source>
</evidence>
<evidence type="ECO:0000255" key="3"/>
<evidence type="ECO:0000256" key="4">
    <source>
        <dbReference type="SAM" id="MobiDB-lite"/>
    </source>
</evidence>
<evidence type="ECO:0000269" key="5">
    <source>
    </source>
</evidence>
<evidence type="ECO:0000269" key="6">
    <source>
    </source>
</evidence>
<evidence type="ECO:0000269" key="7">
    <source>
    </source>
</evidence>
<evidence type="ECO:0000269" key="8">
    <source>
    </source>
</evidence>
<evidence type="ECO:0000269" key="9">
    <source>
    </source>
</evidence>
<evidence type="ECO:0000269" key="10">
    <source>
    </source>
</evidence>
<evidence type="ECO:0000269" key="11">
    <source>
    </source>
</evidence>
<evidence type="ECO:0000269" key="12">
    <source>
    </source>
</evidence>
<evidence type="ECO:0000269" key="13">
    <source>
    </source>
</evidence>
<evidence type="ECO:0000269" key="14">
    <source>
    </source>
</evidence>
<evidence type="ECO:0000303" key="15">
    <source>
    </source>
</evidence>
<evidence type="ECO:0000303" key="16">
    <source>
    </source>
</evidence>
<evidence type="ECO:0000305" key="17"/>
<evidence type="ECO:0000305" key="18">
    <source>
    </source>
</evidence>
<evidence type="ECO:0007744" key="19">
    <source>
        <dbReference type="PDB" id="1EQY"/>
    </source>
</evidence>
<evidence type="ECO:0007744" key="20">
    <source>
        <dbReference type="PDB" id="1H1V"/>
    </source>
</evidence>
<evidence type="ECO:0007744" key="21">
    <source>
        <dbReference type="PDB" id="1SOL"/>
    </source>
</evidence>
<evidence type="ECO:0007744" key="22">
    <source>
        <dbReference type="PDB" id="2FH1"/>
    </source>
</evidence>
<evidence type="ECO:0007744" key="23">
    <source>
        <dbReference type="PDB" id="2FH2"/>
    </source>
</evidence>
<evidence type="ECO:0007744" key="24">
    <source>
        <dbReference type="PDB" id="2FH3"/>
    </source>
</evidence>
<evidence type="ECO:0007744" key="25">
    <source>
        <dbReference type="PDB" id="2FH4"/>
    </source>
</evidence>
<evidence type="ECO:0007744" key="26">
    <source>
        <dbReference type="PDB" id="3FFK"/>
    </source>
</evidence>
<evidence type="ECO:0007744" key="27">
    <source>
        <dbReference type="PDB" id="3FFN"/>
    </source>
</evidence>
<evidence type="ECO:0007744" key="28">
    <source>
        <dbReference type="PDB" id="3TU5"/>
    </source>
</evidence>
<evidence type="ECO:0007744" key="29">
    <source>
    </source>
</evidence>
<evidence type="ECO:0007829" key="30">
    <source>
        <dbReference type="PDB" id="1P8X"/>
    </source>
</evidence>
<evidence type="ECO:0007829" key="31">
    <source>
        <dbReference type="PDB" id="1P8Z"/>
    </source>
</evidence>
<evidence type="ECO:0007829" key="32">
    <source>
        <dbReference type="PDB" id="1SOL"/>
    </source>
</evidence>
<evidence type="ECO:0007829" key="33">
    <source>
        <dbReference type="PDB" id="2FH1"/>
    </source>
</evidence>
<evidence type="ECO:0007829" key="34">
    <source>
        <dbReference type="PDB" id="2FH4"/>
    </source>
</evidence>
<evidence type="ECO:0007829" key="35">
    <source>
        <dbReference type="PDB" id="3CIP"/>
    </source>
</evidence>
<evidence type="ECO:0007829" key="36">
    <source>
        <dbReference type="PDB" id="3FFK"/>
    </source>
</evidence>
<evidence type="ECO:0007829" key="37">
    <source>
        <dbReference type="PDB" id="3FFN"/>
    </source>
</evidence>
<evidence type="ECO:0007829" key="38">
    <source>
        <dbReference type="PDB" id="5FAF"/>
    </source>
</evidence>
<evidence type="ECO:0007829" key="39">
    <source>
        <dbReference type="PDB" id="5H3M"/>
    </source>
</evidence>
<evidence type="ECO:0007829" key="40">
    <source>
        <dbReference type="PDB" id="6JCO"/>
    </source>
</evidence>
<evidence type="ECO:0007829" key="41">
    <source>
        <dbReference type="PDB" id="6JEH"/>
    </source>
</evidence>
<evidence type="ECO:0007829" key="42">
    <source>
        <dbReference type="PDB" id="6LJE"/>
    </source>
</evidence>
<evidence type="ECO:0007829" key="43">
    <source>
        <dbReference type="PDB" id="6Q9R"/>
    </source>
</evidence>
<evidence type="ECO:0007829" key="44">
    <source>
        <dbReference type="PDB" id="8VIZ"/>
    </source>
</evidence>
<keyword id="KW-0002">3D-structure</keyword>
<keyword id="KW-0007">Acetylation</keyword>
<keyword id="KW-0117">Actin capping</keyword>
<keyword id="KW-0009">Actin-binding</keyword>
<keyword id="KW-0024">Alternative initiation</keyword>
<keyword id="KW-0025">Alternative splicing</keyword>
<keyword id="KW-0034">Amyloid</keyword>
<keyword id="KW-1008">Amyloidosis</keyword>
<keyword id="KW-0106">Calcium</keyword>
<keyword id="KW-0970">Cilium biogenesis/degradation</keyword>
<keyword id="KW-1212">Corneal dystrophy</keyword>
<keyword id="KW-0963">Cytoplasm</keyword>
<keyword id="KW-0206">Cytoskeleton</keyword>
<keyword id="KW-0903">Direct protein sequencing</keyword>
<keyword id="KW-0225">Disease variant</keyword>
<keyword id="KW-1015">Disulfide bond</keyword>
<keyword id="KW-0479">Metal-binding</keyword>
<keyword id="KW-0597">Phosphoprotein</keyword>
<keyword id="KW-1267">Proteomics identification</keyword>
<keyword id="KW-1185">Reference proteome</keyword>
<keyword id="KW-0677">Repeat</keyword>
<keyword id="KW-0964">Secreted</keyword>
<keyword id="KW-0732">Signal</keyword>
<sequence>MAPHRPAPALLCALSLALCALSLPVRAATASRGASQAGAPQGRVPEARPNSMVVEHPEFLKAGKEPGLQIWRVEKFDLVPVPTNLYGDFFTGDAYVILKTVQLRNGNLQYDLHYWLGNECSQDESGAAAIFTVQLDDYLNGRAVQHREVQGFESATFLGYFKSGLKYKKGGVASGFKHVVPNEVVVQRLFQVKGRRVVRATEVPVSWESFNNGDCFILDLGNNIHQWCGSNSNRYERLKATQVSKGIRDNERSGRARVHVSEEGTEPEAMLQVLGPKPALPAGTEDTAKEDAANRKLAKLYKVSNGAGTMSVSLVADENPFAQGALKSEDCFILDHGKDGKIFVWKGKQANTEERKAALKTASDFITKMDYPKQTQVSVLPEGGETPLFKQFFKNWRDPDQTDGLGLSYLSSHIANVERVPFDAATLHTSTAMAAQHGMDDDGTGQKQIWRIEGSNKVPVDPATYGQFYGGDSYIILYNYRHGGRQGQIIYNWQGAQSTQDEVAASAILTAQLDEELGGTPVQSRVVQGKEPAHLMSLFGGKPMIIYKGGTSREGGQTAPASTRLFQVRANSAGATRAVEVLPKAGALNSNDAFVLKTPSAAYLWVGTGASEAEKTGAQELLRVLRAQPVQVAEGSEPDGFWEALGGKAAYRTSPRLKDKKMDAHPPRLFACSNKIGRFVIEEVPGELMQEDLATDDVMLLDTWDQVFVWVGKDSQEEEKTEALTSAKRYIETDPANRDRRTPITVVKQGFEPPSFVGWFLGWDDDYWSVDPLDRAMAELAA</sequence>
<gene>
    <name type="primary">GSN</name>
</gene>
<feature type="signal peptide">
    <location>
        <begin position="1"/>
        <end position="27"/>
    </location>
</feature>
<feature type="chain" id="PRO_0000036385" description="Gelsolin">
    <location>
        <begin position="28"/>
        <end position="782"/>
    </location>
</feature>
<feature type="repeat" description="Gelsolin-like 1" evidence="3">
    <location>
        <begin position="76"/>
        <end position="158"/>
    </location>
</feature>
<feature type="repeat" description="Gelsolin-like 2" evidence="3">
    <location>
        <begin position="198"/>
        <end position="270"/>
    </location>
</feature>
<feature type="repeat" description="Gelsolin-like 3" evidence="3">
    <location>
        <begin position="317"/>
        <end position="389"/>
    </location>
</feature>
<feature type="repeat" description="Gelsolin-like 4" evidence="3">
    <location>
        <begin position="455"/>
        <end position="536"/>
    </location>
</feature>
<feature type="repeat" description="Gelsolin-like 5" evidence="3">
    <location>
        <begin position="576"/>
        <end position="642"/>
    </location>
</feature>
<feature type="repeat" description="Gelsolin-like 6" evidence="3">
    <location>
        <begin position="681"/>
        <end position="756"/>
    </location>
</feature>
<feature type="region of interest" description="Actin-severing" evidence="3">
    <location>
        <begin position="53"/>
        <end position="176"/>
    </location>
</feature>
<feature type="region of interest" description="Actin-actin interfilament contact point">
    <location>
        <begin position="123"/>
        <end position="126"/>
    </location>
</feature>
<feature type="region of interest" description="Disordered" evidence="4">
    <location>
        <begin position="247"/>
        <end position="285"/>
    </location>
</feature>
<feature type="region of interest" description="Actin-binding, Ca-sensitive" evidence="3">
    <location>
        <begin position="434"/>
        <end position="782"/>
    </location>
</feature>
<feature type="compositionally biased region" description="Basic and acidic residues" evidence="4">
    <location>
        <begin position="247"/>
        <end position="262"/>
    </location>
</feature>
<feature type="binding site" evidence="10 26">
    <location>
        <position position="92"/>
    </location>
    <ligand>
        <name>Ca(2+)</name>
        <dbReference type="ChEBI" id="CHEBI:29108"/>
        <label>1</label>
        <note>type II</note>
    </ligand>
</feature>
<feature type="binding site" evidence="10 26">
    <location>
        <position position="93"/>
    </location>
    <ligand>
        <name>Ca(2+)</name>
        <dbReference type="ChEBI" id="CHEBI:29108"/>
        <label>1</label>
        <note>type II</note>
    </ligand>
</feature>
<feature type="binding site" evidence="10 26">
    <location>
        <position position="124"/>
    </location>
    <ligand>
        <name>Ca(2+)</name>
        <dbReference type="ChEBI" id="CHEBI:29108"/>
        <label>1</label>
        <note>type II</note>
    </ligand>
</feature>
<feature type="binding site" evidence="10 26">
    <location>
        <position position="136"/>
    </location>
    <ligand>
        <name>Ca(2+)</name>
        <dbReference type="ChEBI" id="CHEBI:29108"/>
        <label>2</label>
        <note>type I</note>
    </ligand>
</feature>
<feature type="binding site" evidence="10 26">
    <location>
        <position position="141"/>
    </location>
    <ligand>
        <name>Ca(2+)</name>
        <dbReference type="ChEBI" id="CHEBI:29108"/>
        <label>2</label>
        <note>type I</note>
    </ligand>
</feature>
<feature type="binding site" evidence="10 26">
    <location>
        <position position="143"/>
    </location>
    <ligand>
        <name>Ca(2+)</name>
        <dbReference type="ChEBI" id="CHEBI:29108"/>
        <label>2</label>
        <note>type I</note>
    </ligand>
</feature>
<feature type="binding site" evidence="1">
    <location>
        <begin position="162"/>
        <end position="169"/>
    </location>
    <ligand>
        <name>a 1,2-diacyl-sn-glycero-3-phospho-(1D-myo-inositol-4,5-bisphosphate)</name>
        <dbReference type="ChEBI" id="CHEBI:58456"/>
    </ligand>
</feature>
<feature type="binding site" evidence="10 26">
    <location>
        <position position="172"/>
    </location>
    <ligand>
        <name>Ca(2+)</name>
        <dbReference type="ChEBI" id="CHEBI:29108"/>
        <label>1</label>
        <note>type II</note>
    </ligand>
</feature>
<feature type="binding site" evidence="1">
    <location>
        <begin position="188"/>
        <end position="196"/>
    </location>
    <ligand>
        <name>a 1,2-diacyl-sn-glycero-3-phospho-(1D-myo-inositol-4,5-bisphosphate)</name>
        <dbReference type="ChEBI" id="CHEBI:58456"/>
    </ligand>
</feature>
<feature type="binding site" evidence="10 26">
    <location>
        <position position="213"/>
    </location>
    <ligand>
        <name>Ca(2+)</name>
        <dbReference type="ChEBI" id="CHEBI:29108"/>
        <label>3</label>
        <note>type II</note>
    </ligand>
</feature>
<feature type="binding site" evidence="10 26">
    <location>
        <position position="214"/>
    </location>
    <ligand>
        <name>Ca(2+)</name>
        <dbReference type="ChEBI" id="CHEBI:29108"/>
        <label>3</label>
        <note>type II</note>
    </ligand>
</feature>
<feature type="binding site" evidence="10 26">
    <location>
        <position position="236"/>
    </location>
    <ligand>
        <name>Ca(2+)</name>
        <dbReference type="ChEBI" id="CHEBI:29108"/>
        <label>3</label>
        <note>type II</note>
    </ligand>
</feature>
<feature type="binding site" evidence="10 26">
    <location>
        <position position="286"/>
    </location>
    <ligand>
        <name>Ca(2+)</name>
        <dbReference type="ChEBI" id="CHEBI:29108"/>
        <label>3</label>
        <note>type II</note>
    </ligand>
</feature>
<feature type="binding site" evidence="10 26">
    <location>
        <position position="329"/>
    </location>
    <ligand>
        <name>Ca(2+)</name>
        <dbReference type="ChEBI" id="CHEBI:29108"/>
        <label>4</label>
        <note>type II</note>
    </ligand>
</feature>
<feature type="binding site" evidence="10 26">
    <location>
        <position position="330"/>
    </location>
    <ligand>
        <name>Ca(2+)</name>
        <dbReference type="ChEBI" id="CHEBI:29108"/>
        <label>4</label>
        <note>type II</note>
    </ligand>
</feature>
<feature type="binding site" evidence="10 26">
    <location>
        <position position="354"/>
    </location>
    <ligand>
        <name>Ca(2+)</name>
        <dbReference type="ChEBI" id="CHEBI:29108"/>
        <label>4</label>
        <note>type II</note>
    </ligand>
</feature>
<feature type="binding site" evidence="6 8 20 23 24">
    <location>
        <position position="471"/>
    </location>
    <ligand>
        <name>Ca(2+)</name>
        <dbReference type="ChEBI" id="CHEBI:29108"/>
        <label>5</label>
        <note>type II</note>
    </ligand>
</feature>
<feature type="binding site" evidence="6 8 20 22 23 24">
    <location>
        <position position="472"/>
    </location>
    <ligand>
        <name>Ca(2+)</name>
        <dbReference type="ChEBI" id="CHEBI:29108"/>
        <label>5</label>
        <note>type II</note>
    </ligand>
</feature>
<feature type="binding site" evidence="6 8 20 22 23 24">
    <location>
        <position position="502"/>
    </location>
    <ligand>
        <name>Ca(2+)</name>
        <dbReference type="ChEBI" id="CHEBI:29108"/>
        <label>5</label>
        <note>type II</note>
    </ligand>
</feature>
<feature type="binding site" evidence="6 20">
    <location>
        <position position="514"/>
    </location>
    <ligand>
        <name>Ca(2+)</name>
        <dbReference type="ChEBI" id="CHEBI:29108"/>
        <label>6</label>
        <note>type I</note>
    </ligand>
</feature>
<feature type="binding site" evidence="6 20">
    <location>
        <position position="519"/>
    </location>
    <ligand>
        <name>Ca(2+)</name>
        <dbReference type="ChEBI" id="CHEBI:29108"/>
        <label>6</label>
        <note>type I</note>
    </ligand>
</feature>
<feature type="binding site" evidence="6 20">
    <location>
        <position position="521"/>
    </location>
    <ligand>
        <name>Ca(2+)</name>
        <dbReference type="ChEBI" id="CHEBI:29108"/>
        <label>6</label>
        <note>type I</note>
    </ligand>
</feature>
<feature type="binding site" evidence="6 8 20 22 23 24">
    <location>
        <position position="551"/>
    </location>
    <ligand>
        <name>Ca(2+)</name>
        <dbReference type="ChEBI" id="CHEBI:29108"/>
        <label>5</label>
        <note>type II</note>
    </ligand>
</feature>
<feature type="binding site" evidence="6 8 20 22 23 24">
    <location>
        <position position="591"/>
    </location>
    <ligand>
        <name>Ca(2+)</name>
        <dbReference type="ChEBI" id="CHEBI:29108"/>
        <label>7</label>
        <note>type II</note>
    </ligand>
</feature>
<feature type="binding site" evidence="6 8 20 22 23 24">
    <location>
        <position position="592"/>
    </location>
    <ligand>
        <name>Ca(2+)</name>
        <dbReference type="ChEBI" id="CHEBI:29108"/>
        <label>7</label>
        <note>type II</note>
    </ligand>
</feature>
<feature type="binding site" evidence="6 8 20 23 24">
    <location>
        <position position="614"/>
    </location>
    <ligand>
        <name>Ca(2+)</name>
        <dbReference type="ChEBI" id="CHEBI:29108"/>
        <label>7</label>
        <note>type II</note>
    </ligand>
</feature>
<feature type="binding site" evidence="6 8 20 22 23 24">
    <location>
        <position position="696"/>
    </location>
    <ligand>
        <name>Ca(2+)</name>
        <dbReference type="ChEBI" id="CHEBI:29108"/>
        <label>8</label>
        <note>type II</note>
    </ligand>
</feature>
<feature type="binding site" evidence="6 8 20 24">
    <location>
        <position position="697"/>
    </location>
    <ligand>
        <name>Ca(2+)</name>
        <dbReference type="ChEBI" id="CHEBI:29108"/>
        <label>8</label>
        <note>type II</note>
    </ligand>
</feature>
<feature type="binding site" evidence="6 8 20 22 23 24">
    <location>
        <position position="719"/>
    </location>
    <ligand>
        <name>Ca(2+)</name>
        <dbReference type="ChEBI" id="CHEBI:29108"/>
        <label>8</label>
        <note>type II</note>
    </ligand>
</feature>
<feature type="modified residue" description="Phosphotyrosine; by SRC; in vitro" evidence="5">
    <location>
        <position position="86"/>
    </location>
</feature>
<feature type="modified residue" description="Phosphotyrosine; by SRC; in vitro" evidence="5">
    <location>
        <position position="409"/>
    </location>
</feature>
<feature type="modified residue" description="Phosphotyrosine; by SRC" evidence="5">
    <location>
        <position position="465"/>
    </location>
</feature>
<feature type="modified residue" description="N6-acetyllysine" evidence="2">
    <location>
        <position position="584"/>
    </location>
</feature>
<feature type="modified residue" description="Phosphotyrosine; by SRC; in vitro" evidence="5">
    <location>
        <position position="603"/>
    </location>
</feature>
<feature type="modified residue" description="Phosphotyrosine; by SRC; in vitro" evidence="5">
    <location>
        <position position="651"/>
    </location>
</feature>
<feature type="modified residue" description="Phosphothreonine" evidence="29">
    <location>
        <position position="742"/>
    </location>
</feature>
<feature type="disulfide bond" description="In isoform 1" evidence="10 13 14">
    <location>
        <begin position="215"/>
        <end position="228"/>
    </location>
</feature>
<feature type="splice variant" id="VSP_018959" description="In isoform 2." evidence="15 16">
    <location>
        <begin position="1"/>
        <end position="51"/>
    </location>
</feature>
<feature type="splice variant" id="VSP_042879" description="In isoform 3." evidence="15">
    <original>MAPHRPAPALLCALSLALCALSLPVRAATASRGASQAGAPQGRVPEAR</original>
    <variation>MEKLFCCF</variation>
    <location>
        <begin position="1"/>
        <end position="48"/>
    </location>
</feature>
<feature type="splice variant" id="VSP_054791" description="In isoform 4." evidence="15">
    <original>MAPHRPAPALLCALSLALCALSLPVRAATASRGASQAGAPQGRVPEAR</original>
    <variation>MPLCT</variation>
    <location>
        <begin position="1"/>
        <end position="48"/>
    </location>
</feature>
<feature type="sequence variant" id="VAR_036337" description="In a breast cancer sample; somatic mutation." evidence="9">
    <original>S</original>
    <variation>L</variation>
    <location>
        <position position="22"/>
    </location>
</feature>
<feature type="sequence variant" id="VAR_024690" description="In dbSNP:rs2230287.">
    <original>A</original>
    <variation>T</variation>
    <location>
        <position position="129"/>
    </location>
</feature>
<feature type="sequence variant" id="VAR_036338" description="In a breast cancer sample; somatic mutation." evidence="9">
    <original>T</original>
    <variation>I</variation>
    <location>
        <position position="201"/>
    </location>
</feature>
<feature type="sequence variant" id="VAR_007718" description="In AMYLD4; does not result in actin depolymerization in absence of calcium; dbSNP:rs121909715." evidence="7 10 12">
    <original>D</original>
    <variation>N</variation>
    <location>
        <position position="214"/>
    </location>
</feature>
<feature type="sequence variant" id="VAR_007719" description="In AMYLD4; dbSNP:rs121909715." evidence="7">
    <original>D</original>
    <variation>Y</variation>
    <location>
        <position position="214"/>
    </location>
</feature>
<feature type="sequence variant" id="VAR_061982" description="In dbSNP:rs11550199.">
    <original>N</original>
    <variation>D</variation>
    <location>
        <position position="231"/>
    </location>
</feature>
<feature type="sequence variant" id="VAR_036339" description="In a breast cancer sample; somatic mutation." evidence="9">
    <original>S</original>
    <variation>N</variation>
    <location>
        <position position="611"/>
    </location>
</feature>
<feature type="sequence variant" id="VAR_033958" description="In dbSNP:rs9696578.">
    <original>R</original>
    <variation>L</variation>
    <location>
        <position position="668"/>
    </location>
</feature>
<feature type="mutagenesis site" description="Does not result in actin depolymerization activity in absence of calcium. Has actin depolymerization activity in absence of calcium; when associated with N-214 and N-697 or N-214, N-697 and Q-719." evidence="10">
    <original>E</original>
    <variation>Q</variation>
    <location>
        <position position="236"/>
    </location>
</feature>
<feature type="mutagenesis site" description="Does not result in actin depolymerization activity in absence of calcium. Has actin depolymerization activity in absence of calcium; when associated with N-214 and Q-236, N-214 and Q-719 or N-214, Q-236 and Q-719." evidence="10">
    <original>D</original>
    <variation>N</variation>
    <location>
        <position position="697"/>
    </location>
</feature>
<feature type="mutagenesis site" description="Does not result in actin depolymerization activity in absence of calcium. Has actin depolymerization activity in absence of calcium; when associated with N-214 and N-697 or N-214, Q-236 and N-697." evidence="10">
    <original>E</original>
    <variation>Q</variation>
    <location>
        <position position="719"/>
    </location>
</feature>
<feature type="sequence conflict" description="In Ref. 2; BAH13037." evidence="17" ref="2">
    <original>N</original>
    <variation>D</variation>
    <location>
        <position position="294"/>
    </location>
</feature>
<feature type="sequence conflict" description="In Ref. 2; BAH13037." evidence="17" ref="2">
    <original>R</original>
    <variation>W</variation>
    <location>
        <position position="419"/>
    </location>
</feature>
<feature type="sequence conflict" description="In Ref. 2; BAH13037." evidence="17" ref="2">
    <original>Y</original>
    <variation>H</variation>
    <location>
        <position position="603"/>
    </location>
</feature>
<feature type="strand" evidence="37">
    <location>
        <begin position="52"/>
        <end position="55"/>
    </location>
</feature>
<feature type="helix" evidence="35">
    <location>
        <begin position="57"/>
        <end position="61"/>
    </location>
</feature>
<feature type="strand" evidence="35">
    <location>
        <begin position="64"/>
        <end position="74"/>
    </location>
</feature>
<feature type="strand" evidence="35">
    <location>
        <begin position="77"/>
        <end position="80"/>
    </location>
</feature>
<feature type="helix" evidence="35">
    <location>
        <begin position="83"/>
        <end position="85"/>
    </location>
</feature>
<feature type="strand" evidence="35">
    <location>
        <begin position="88"/>
        <end position="90"/>
    </location>
</feature>
<feature type="strand" evidence="35">
    <location>
        <begin position="94"/>
        <end position="102"/>
    </location>
</feature>
<feature type="turn" evidence="31">
    <location>
        <begin position="104"/>
        <end position="106"/>
    </location>
</feature>
<feature type="strand" evidence="35">
    <location>
        <begin position="108"/>
        <end position="116"/>
    </location>
</feature>
<feature type="helix" evidence="35">
    <location>
        <begin position="122"/>
        <end position="138"/>
    </location>
</feature>
<feature type="turn" evidence="35">
    <location>
        <begin position="139"/>
        <end position="141"/>
    </location>
</feature>
<feature type="strand" evidence="35">
    <location>
        <begin position="143"/>
        <end position="149"/>
    </location>
</feature>
<feature type="strand" evidence="39">
    <location>
        <begin position="150"/>
        <end position="152"/>
    </location>
</feature>
<feature type="helix" evidence="35">
    <location>
        <begin position="155"/>
        <end position="158"/>
    </location>
</feature>
<feature type="strand" evidence="35">
    <location>
        <begin position="166"/>
        <end position="169"/>
    </location>
</feature>
<feature type="turn" evidence="43">
    <location>
        <begin position="172"/>
        <end position="175"/>
    </location>
</feature>
<feature type="turn" evidence="39">
    <location>
        <begin position="176"/>
        <end position="178"/>
    </location>
</feature>
<feature type="strand" evidence="32">
    <location>
        <begin position="179"/>
        <end position="181"/>
    </location>
</feature>
<feature type="helix" evidence="39">
    <location>
        <begin position="183"/>
        <end position="186"/>
    </location>
</feature>
<feature type="strand" evidence="38">
    <location>
        <begin position="188"/>
        <end position="193"/>
    </location>
</feature>
<feature type="strand" evidence="38">
    <location>
        <begin position="195"/>
        <end position="197"/>
    </location>
</feature>
<feature type="strand" evidence="38">
    <location>
        <begin position="199"/>
        <end position="203"/>
    </location>
</feature>
<feature type="helix" evidence="38">
    <location>
        <begin position="207"/>
        <end position="209"/>
    </location>
</feature>
<feature type="strand" evidence="38">
    <location>
        <begin position="214"/>
        <end position="219"/>
    </location>
</feature>
<feature type="strand" evidence="38">
    <location>
        <begin position="221"/>
        <end position="228"/>
    </location>
</feature>
<feature type="strand" evidence="40">
    <location>
        <begin position="230"/>
        <end position="232"/>
    </location>
</feature>
<feature type="helix" evidence="38">
    <location>
        <begin position="234"/>
        <end position="251"/>
    </location>
</feature>
<feature type="strand" evidence="38">
    <location>
        <begin position="256"/>
        <end position="262"/>
    </location>
</feature>
<feature type="turn" evidence="36">
    <location>
        <begin position="263"/>
        <end position="265"/>
    </location>
</feature>
<feature type="helix" evidence="38">
    <location>
        <begin position="268"/>
        <end position="274"/>
    </location>
</feature>
<feature type="helix" evidence="44">
    <location>
        <begin position="289"/>
        <end position="295"/>
    </location>
</feature>
<feature type="strand" evidence="42">
    <location>
        <begin position="299"/>
        <end position="304"/>
    </location>
</feature>
<feature type="strand" evidence="37">
    <location>
        <begin position="306"/>
        <end position="309"/>
    </location>
</feature>
<feature type="strand" evidence="42">
    <location>
        <begin position="311"/>
        <end position="316"/>
    </location>
</feature>
<feature type="strand" evidence="42">
    <location>
        <begin position="318"/>
        <end position="321"/>
    </location>
</feature>
<feature type="helix" evidence="42">
    <location>
        <begin position="323"/>
        <end position="325"/>
    </location>
</feature>
<feature type="strand" evidence="42">
    <location>
        <begin position="330"/>
        <end position="336"/>
    </location>
</feature>
<feature type="helix" evidence="42">
    <location>
        <begin position="337"/>
        <end position="339"/>
    </location>
</feature>
<feature type="strand" evidence="42">
    <location>
        <begin position="341"/>
        <end position="346"/>
    </location>
</feature>
<feature type="helix" evidence="42">
    <location>
        <begin position="352"/>
        <end position="368"/>
    </location>
</feature>
<feature type="strand" evidence="42">
    <location>
        <begin position="377"/>
        <end position="381"/>
    </location>
</feature>
<feature type="helix" evidence="42">
    <location>
        <begin position="387"/>
        <end position="390"/>
    </location>
</feature>
<feature type="strand" evidence="44">
    <location>
        <begin position="393"/>
        <end position="395"/>
    </location>
</feature>
<feature type="strand" evidence="43">
    <location>
        <begin position="401"/>
        <end position="406"/>
    </location>
</feature>
<feature type="helix" evidence="43">
    <location>
        <begin position="412"/>
        <end position="414"/>
    </location>
</feature>
<feature type="helix" evidence="44">
    <location>
        <begin position="424"/>
        <end position="426"/>
    </location>
</feature>
<feature type="helix" evidence="41">
    <location>
        <begin position="427"/>
        <end position="429"/>
    </location>
</feature>
<feature type="helix" evidence="43">
    <location>
        <begin position="431"/>
        <end position="437"/>
    </location>
</feature>
<feature type="strand" evidence="33">
    <location>
        <begin position="445"/>
        <end position="453"/>
    </location>
</feature>
<feature type="strand" evidence="33">
    <location>
        <begin position="456"/>
        <end position="459"/>
    </location>
</feature>
<feature type="helix" evidence="33">
    <location>
        <begin position="462"/>
        <end position="464"/>
    </location>
</feature>
<feature type="strand" evidence="33">
    <location>
        <begin position="467"/>
        <end position="469"/>
    </location>
</feature>
<feature type="strand" evidence="33">
    <location>
        <begin position="472"/>
        <end position="482"/>
    </location>
</feature>
<feature type="strand" evidence="33">
    <location>
        <begin position="485"/>
        <end position="494"/>
    </location>
</feature>
<feature type="helix" evidence="33">
    <location>
        <begin position="500"/>
        <end position="516"/>
    </location>
</feature>
<feature type="turn" evidence="30">
    <location>
        <begin position="517"/>
        <end position="519"/>
    </location>
</feature>
<feature type="strand" evidence="33">
    <location>
        <begin position="521"/>
        <end position="527"/>
    </location>
</feature>
<feature type="helix" evidence="33">
    <location>
        <begin position="533"/>
        <end position="536"/>
    </location>
</feature>
<feature type="helix" evidence="33">
    <location>
        <begin position="537"/>
        <end position="539"/>
    </location>
</feature>
<feature type="strand" evidence="33">
    <location>
        <begin position="544"/>
        <end position="548"/>
    </location>
</feature>
<feature type="turn" evidence="33">
    <location>
        <begin position="553"/>
        <end position="555"/>
    </location>
</feature>
<feature type="strand" evidence="33">
    <location>
        <begin position="562"/>
        <end position="570"/>
    </location>
</feature>
<feature type="strand" evidence="44">
    <location>
        <begin position="572"/>
        <end position="574"/>
    </location>
</feature>
<feature type="strand" evidence="33">
    <location>
        <begin position="576"/>
        <end position="581"/>
    </location>
</feature>
<feature type="helix" evidence="33">
    <location>
        <begin position="585"/>
        <end position="587"/>
    </location>
</feature>
<feature type="strand" evidence="33">
    <location>
        <begin position="592"/>
        <end position="597"/>
    </location>
</feature>
<feature type="strand" evidence="33">
    <location>
        <begin position="602"/>
        <end position="606"/>
    </location>
</feature>
<feature type="helix" evidence="33">
    <location>
        <begin position="612"/>
        <end position="624"/>
    </location>
</feature>
<feature type="strand" evidence="33">
    <location>
        <begin position="630"/>
        <end position="633"/>
    </location>
</feature>
<feature type="helix" evidence="33">
    <location>
        <begin position="639"/>
        <end position="644"/>
    </location>
</feature>
<feature type="strand" evidence="34">
    <location>
        <begin position="645"/>
        <end position="647"/>
    </location>
</feature>
<feature type="helix" evidence="33">
    <location>
        <begin position="655"/>
        <end position="658"/>
    </location>
</feature>
<feature type="strand" evidence="44">
    <location>
        <begin position="663"/>
        <end position="665"/>
    </location>
</feature>
<feature type="strand" evidence="33">
    <location>
        <begin position="668"/>
        <end position="673"/>
    </location>
</feature>
<feature type="strand" evidence="41">
    <location>
        <begin position="676"/>
        <end position="678"/>
    </location>
</feature>
<feature type="strand" evidence="33">
    <location>
        <begin position="680"/>
        <end position="684"/>
    </location>
</feature>
<feature type="helix" evidence="33">
    <location>
        <begin position="690"/>
        <end position="692"/>
    </location>
</feature>
<feature type="strand" evidence="33">
    <location>
        <begin position="697"/>
        <end position="702"/>
    </location>
</feature>
<feature type="strand" evidence="33">
    <location>
        <begin position="707"/>
        <end position="711"/>
    </location>
</feature>
<feature type="helix" evidence="33">
    <location>
        <begin position="717"/>
        <end position="732"/>
    </location>
</feature>
<feature type="turn" evidence="33">
    <location>
        <begin position="735"/>
        <end position="737"/>
    </location>
</feature>
<feature type="strand" evidence="33">
    <location>
        <begin position="744"/>
        <end position="748"/>
    </location>
</feature>
<feature type="helix" evidence="33">
    <location>
        <begin position="754"/>
        <end position="757"/>
    </location>
</feature>
<feature type="strand" evidence="33">
    <location>
        <begin position="760"/>
        <end position="762"/>
    </location>
</feature>
<feature type="helix" evidence="43">
    <location>
        <begin position="767"/>
        <end position="769"/>
    </location>
</feature>
<feature type="helix" evidence="43">
    <location>
        <begin position="772"/>
        <end position="778"/>
    </location>
</feature>
<name>GELS_HUMAN</name>
<dbReference type="EMBL" id="X04412">
    <property type="protein sequence ID" value="CAA28000.1"/>
    <property type="molecule type" value="mRNA"/>
</dbReference>
<dbReference type="EMBL" id="AK096280">
    <property type="protein sequence ID" value="BAG53247.1"/>
    <property type="molecule type" value="mRNA"/>
</dbReference>
<dbReference type="EMBL" id="AK125819">
    <property type="protein sequence ID" value="BAG54252.1"/>
    <property type="molecule type" value="mRNA"/>
</dbReference>
<dbReference type="EMBL" id="AK295572">
    <property type="protein sequence ID" value="BAH12109.1"/>
    <property type="molecule type" value="mRNA"/>
</dbReference>
<dbReference type="EMBL" id="AK299453">
    <property type="protein sequence ID" value="BAH13037.1"/>
    <property type="molecule type" value="mRNA"/>
</dbReference>
<dbReference type="EMBL" id="AK315494">
    <property type="protein sequence ID" value="BAG37878.1"/>
    <property type="molecule type" value="mRNA"/>
</dbReference>
<dbReference type="EMBL" id="AL137068">
    <property type="status" value="NOT_ANNOTATED_CDS"/>
    <property type="molecule type" value="Genomic_DNA"/>
</dbReference>
<dbReference type="EMBL" id="AL513122">
    <property type="status" value="NOT_ANNOTATED_CDS"/>
    <property type="molecule type" value="Genomic_DNA"/>
</dbReference>
<dbReference type="EMBL" id="CH471090">
    <property type="protein sequence ID" value="EAW87489.1"/>
    <property type="molecule type" value="Genomic_DNA"/>
</dbReference>
<dbReference type="EMBL" id="CH471090">
    <property type="protein sequence ID" value="EAW87490.1"/>
    <property type="molecule type" value="Genomic_DNA"/>
</dbReference>
<dbReference type="EMBL" id="CH471090">
    <property type="protein sequence ID" value="EAW87491.1"/>
    <property type="molecule type" value="Genomic_DNA"/>
</dbReference>
<dbReference type="EMBL" id="BC017491">
    <property type="protein sequence ID" value="AAH17491.1"/>
    <property type="molecule type" value="mRNA"/>
</dbReference>
<dbReference type="EMBL" id="BC026033">
    <property type="protein sequence ID" value="AAH26033.1"/>
    <property type="molecule type" value="mRNA"/>
</dbReference>
<dbReference type="CCDS" id="CCDS48011.1">
    <molecule id="P06396-3"/>
</dbReference>
<dbReference type="CCDS" id="CCDS65118.1">
    <molecule id="P06396-4"/>
</dbReference>
<dbReference type="CCDS" id="CCDS6828.1">
    <molecule id="P06396-1"/>
</dbReference>
<dbReference type="CCDS" id="CCDS6829.1">
    <molecule id="P06396-2"/>
</dbReference>
<dbReference type="PIR" id="A03011">
    <property type="entry name" value="FAHUP"/>
</dbReference>
<dbReference type="RefSeq" id="NP_000168.1">
    <molecule id="P06396-1"/>
    <property type="nucleotide sequence ID" value="NM_000177.5"/>
</dbReference>
<dbReference type="RefSeq" id="NP_001121134.1">
    <molecule id="P06396-2"/>
    <property type="nucleotide sequence ID" value="NM_001127662.2"/>
</dbReference>
<dbReference type="RefSeq" id="NP_001121135.2">
    <property type="nucleotide sequence ID" value="NM_001127663.1"/>
</dbReference>
<dbReference type="RefSeq" id="NP_001121136.1">
    <molecule id="P06396-2"/>
    <property type="nucleotide sequence ID" value="NM_001127664.2"/>
</dbReference>
<dbReference type="RefSeq" id="NP_001121137.1">
    <molecule id="P06396-2"/>
    <property type="nucleotide sequence ID" value="NM_001127665.2"/>
</dbReference>
<dbReference type="RefSeq" id="NP_001121138.1">
    <molecule id="P06396-3"/>
    <property type="nucleotide sequence ID" value="NM_001127666.2"/>
</dbReference>
<dbReference type="RefSeq" id="NP_001121139.1">
    <molecule id="P06396-3"/>
    <property type="nucleotide sequence ID" value="NM_001127667.2"/>
</dbReference>
<dbReference type="RefSeq" id="NP_001244958.1">
    <property type="nucleotide sequence ID" value="NM_001258029.1"/>
</dbReference>
<dbReference type="RefSeq" id="NP_001244959.1">
    <molecule id="P06396-4"/>
    <property type="nucleotide sequence ID" value="NM_001258030.2"/>
</dbReference>
<dbReference type="RefSeq" id="NP_001339982.1">
    <molecule id="P06396-2"/>
    <property type="nucleotide sequence ID" value="NM_001353053.1"/>
</dbReference>
<dbReference type="RefSeq" id="NP_001339983.1">
    <molecule id="P06396-2"/>
    <property type="nucleotide sequence ID" value="NM_001353054.1"/>
</dbReference>
<dbReference type="RefSeq" id="NP_001339984.1">
    <molecule id="P06396-2"/>
    <property type="nucleotide sequence ID" value="NM_001353055.2"/>
</dbReference>
<dbReference type="RefSeq" id="NP_001339985.1">
    <molecule id="P06396-2"/>
    <property type="nucleotide sequence ID" value="NM_001353056.2"/>
</dbReference>
<dbReference type="RefSeq" id="NP_001339986.1">
    <molecule id="P06396-2"/>
    <property type="nucleotide sequence ID" value="NM_001353057.2"/>
</dbReference>
<dbReference type="RefSeq" id="NP_001339987.1">
    <molecule id="P06396-2"/>
    <property type="nucleotide sequence ID" value="NM_001353058.2"/>
</dbReference>
<dbReference type="RefSeq" id="NP_001339988.1">
    <molecule id="P06396-2"/>
    <property type="nucleotide sequence ID" value="NM_001353059.2"/>
</dbReference>
<dbReference type="RefSeq" id="NP_001339989.1">
    <molecule id="P06396-2"/>
    <property type="nucleotide sequence ID" value="NM_001353060.2"/>
</dbReference>
<dbReference type="RefSeq" id="NP_001339990.1">
    <molecule id="P06396-2"/>
    <property type="nucleotide sequence ID" value="NM_001353061.2"/>
</dbReference>
<dbReference type="RefSeq" id="NP_001339991.1">
    <molecule id="P06396-2"/>
    <property type="nucleotide sequence ID" value="NM_001353062.1"/>
</dbReference>
<dbReference type="RefSeq" id="NP_001339992.1">
    <molecule id="P06396-3"/>
    <property type="nucleotide sequence ID" value="NM_001353063.2"/>
</dbReference>
<dbReference type="RefSeq" id="NP_001339993.1">
    <molecule id="P06396-3"/>
    <property type="nucleotide sequence ID" value="NM_001353064.2"/>
</dbReference>
<dbReference type="RefSeq" id="NP_001339994.1">
    <molecule id="P06396-3"/>
    <property type="nucleotide sequence ID" value="NM_001353065.2"/>
</dbReference>
<dbReference type="RefSeq" id="NP_001339995.1">
    <molecule id="P06396-3"/>
    <property type="nucleotide sequence ID" value="NM_001353066.2"/>
</dbReference>
<dbReference type="RefSeq" id="NP_001339996.1">
    <molecule id="P06396-3"/>
    <property type="nucleotide sequence ID" value="NM_001353067.2"/>
</dbReference>
<dbReference type="RefSeq" id="NP_001339997.1">
    <molecule id="P06396-3"/>
    <property type="nucleotide sequence ID" value="NM_001353068.2"/>
</dbReference>
<dbReference type="RefSeq" id="NP_001339998.1">
    <molecule id="P06396-3"/>
    <property type="nucleotide sequence ID" value="NM_001353069.2"/>
</dbReference>
<dbReference type="RefSeq" id="NP_001339999.1">
    <molecule id="P06396-3"/>
    <property type="nucleotide sequence ID" value="NM_001353070.2"/>
</dbReference>
<dbReference type="RefSeq" id="NP_001340000.1">
    <molecule id="P06396-3"/>
    <property type="nucleotide sequence ID" value="NM_001353071.2"/>
</dbReference>
<dbReference type="RefSeq" id="NP_001340001.1">
    <molecule id="P06396-3"/>
    <property type="nucleotide sequence ID" value="NM_001353072.2"/>
</dbReference>
<dbReference type="RefSeq" id="NP_001340002.1">
    <molecule id="P06396-3"/>
    <property type="nucleotide sequence ID" value="NM_001353073.2"/>
</dbReference>
<dbReference type="RefSeq" id="NP_001340003.1">
    <molecule id="P06396-3"/>
    <property type="nucleotide sequence ID" value="NM_001353074.2"/>
</dbReference>
<dbReference type="RefSeq" id="NP_001340004.1">
    <molecule id="P06396-3"/>
    <property type="nucleotide sequence ID" value="NM_001353075.1"/>
</dbReference>
<dbReference type="RefSeq" id="NP_001340006.1">
    <molecule id="P06396-3"/>
    <property type="nucleotide sequence ID" value="NM_001353077.1"/>
</dbReference>
<dbReference type="RefSeq" id="NP_937895.1">
    <molecule id="P06396-2"/>
    <property type="nucleotide sequence ID" value="NM_198252.3"/>
</dbReference>
<dbReference type="RefSeq" id="XP_005252000.1">
    <property type="nucleotide sequence ID" value="XM_005251943.1"/>
</dbReference>
<dbReference type="RefSeq" id="XP_005252001.1">
    <molecule id="P06396-3"/>
    <property type="nucleotide sequence ID" value="XM_005251944.2"/>
</dbReference>
<dbReference type="RefSeq" id="XP_005252002.1">
    <property type="nucleotide sequence ID" value="XM_005251945.3"/>
</dbReference>
<dbReference type="RefSeq" id="XP_006717142.1">
    <property type="nucleotide sequence ID" value="XM_006717079.1"/>
</dbReference>
<dbReference type="RefSeq" id="XP_011516888.1">
    <property type="nucleotide sequence ID" value="XM_011518586.1"/>
</dbReference>
<dbReference type="RefSeq" id="XP_011516889.1">
    <property type="nucleotide sequence ID" value="XM_011518587.2"/>
</dbReference>
<dbReference type="RefSeq" id="XP_011516890.1">
    <property type="nucleotide sequence ID" value="XM_011518588.2"/>
</dbReference>
<dbReference type="RefSeq" id="XP_011516891.1">
    <property type="nucleotide sequence ID" value="XM_011518589.2"/>
</dbReference>
<dbReference type="RefSeq" id="XP_011516892.1">
    <property type="nucleotide sequence ID" value="XM_011518590.2"/>
</dbReference>
<dbReference type="RefSeq" id="XP_011516893.1">
    <property type="nucleotide sequence ID" value="XM_011518591.2"/>
</dbReference>
<dbReference type="RefSeq" id="XP_011516894.1">
    <property type="nucleotide sequence ID" value="XM_011518592.1"/>
</dbReference>
<dbReference type="RefSeq" id="XP_011516895.1">
    <property type="nucleotide sequence ID" value="XM_011518593.1"/>
</dbReference>
<dbReference type="RefSeq" id="XP_016870135.1">
    <property type="nucleotide sequence ID" value="XM_017014646.1"/>
</dbReference>
<dbReference type="RefSeq" id="XP_016870136.1">
    <property type="nucleotide sequence ID" value="XM_017014647.1"/>
</dbReference>
<dbReference type="RefSeq" id="XP_016870137.1">
    <property type="nucleotide sequence ID" value="XM_017014648.1"/>
</dbReference>
<dbReference type="RefSeq" id="XP_047279223.1">
    <molecule id="P06396-3"/>
    <property type="nucleotide sequence ID" value="XM_047423267.1"/>
</dbReference>
<dbReference type="RefSeq" id="XP_047279224.1">
    <molecule id="P06396-3"/>
    <property type="nucleotide sequence ID" value="XM_047423268.1"/>
</dbReference>
<dbReference type="RefSeq" id="XP_047279225.1">
    <molecule id="P06396-3"/>
    <property type="nucleotide sequence ID" value="XM_047423269.1"/>
</dbReference>
<dbReference type="RefSeq" id="XP_047279226.1">
    <molecule id="P06396-3"/>
    <property type="nucleotide sequence ID" value="XM_047423270.1"/>
</dbReference>
<dbReference type="RefSeq" id="XP_047279227.1">
    <molecule id="P06396-3"/>
    <property type="nucleotide sequence ID" value="XM_047423271.1"/>
</dbReference>
<dbReference type="RefSeq" id="XP_047279228.1">
    <molecule id="P06396-2"/>
    <property type="nucleotide sequence ID" value="XM_047423272.1"/>
</dbReference>
<dbReference type="RefSeq" id="XP_047279229.1">
    <molecule id="P06396-2"/>
    <property type="nucleotide sequence ID" value="XM_047423273.1"/>
</dbReference>
<dbReference type="PDB" id="1C0F">
    <property type="method" value="X-ray"/>
    <property type="resolution" value="2.40 A"/>
    <property type="chains" value="S=53-176"/>
</dbReference>
<dbReference type="PDB" id="1C0G">
    <property type="method" value="X-ray"/>
    <property type="resolution" value="2.00 A"/>
    <property type="chains" value="S=53-176"/>
</dbReference>
<dbReference type="PDB" id="1D4X">
    <property type="method" value="X-ray"/>
    <property type="resolution" value="1.75 A"/>
    <property type="chains" value="G=52-177"/>
</dbReference>
<dbReference type="PDB" id="1DEJ">
    <property type="method" value="X-ray"/>
    <property type="resolution" value="2.40 A"/>
    <property type="chains" value="S=53-176"/>
</dbReference>
<dbReference type="PDB" id="1EQY">
    <property type="method" value="X-ray"/>
    <property type="resolution" value="2.30 A"/>
    <property type="chains" value="S=52-176"/>
</dbReference>
<dbReference type="PDB" id="1ESV">
    <property type="method" value="X-ray"/>
    <property type="resolution" value="2.00 A"/>
    <property type="chains" value="S=52-176"/>
</dbReference>
<dbReference type="PDB" id="1H1V">
    <property type="method" value="X-ray"/>
    <property type="resolution" value="3.00 A"/>
    <property type="chains" value="G=439-769"/>
</dbReference>
<dbReference type="PDB" id="1KCQ">
    <property type="method" value="X-ray"/>
    <property type="resolution" value="1.65 A"/>
    <property type="chains" value="A=185-288"/>
</dbReference>
<dbReference type="PDB" id="1MDU">
    <property type="method" value="X-ray"/>
    <property type="resolution" value="2.20 A"/>
    <property type="chains" value="A/D=52-176"/>
</dbReference>
<dbReference type="PDB" id="1NLV">
    <property type="method" value="X-ray"/>
    <property type="resolution" value="1.80 A"/>
    <property type="chains" value="G=52-176"/>
</dbReference>
<dbReference type="PDB" id="1NM1">
    <property type="method" value="X-ray"/>
    <property type="resolution" value="1.80 A"/>
    <property type="chains" value="G=52-176"/>
</dbReference>
<dbReference type="PDB" id="1NMD">
    <property type="method" value="X-ray"/>
    <property type="resolution" value="1.90 A"/>
    <property type="chains" value="G=52-176"/>
</dbReference>
<dbReference type="PDB" id="1P8X">
    <property type="method" value="X-ray"/>
    <property type="resolution" value="2.00 A"/>
    <property type="chains" value="A/B/C=439-782"/>
</dbReference>
<dbReference type="PDB" id="1P8Z">
    <property type="method" value="X-ray"/>
    <property type="resolution" value="2.60 A"/>
    <property type="chains" value="G=52-187"/>
</dbReference>
<dbReference type="PDB" id="1SOL">
    <property type="method" value="NMR"/>
    <property type="chains" value="A=177-196"/>
</dbReference>
<dbReference type="PDB" id="1T44">
    <property type="method" value="X-ray"/>
    <property type="resolution" value="2.00 A"/>
    <property type="chains" value="G=55-179"/>
</dbReference>
<dbReference type="PDB" id="1YAG">
    <property type="method" value="X-ray"/>
    <property type="resolution" value="1.90 A"/>
    <property type="chains" value="G=52-176"/>
</dbReference>
<dbReference type="PDB" id="1YVN">
    <property type="method" value="X-ray"/>
    <property type="resolution" value="2.10 A"/>
    <property type="chains" value="G=52-176"/>
</dbReference>
<dbReference type="PDB" id="2FF3">
    <property type="method" value="X-ray"/>
    <property type="resolution" value="2.00 A"/>
    <property type="chains" value="A=52-179"/>
</dbReference>
<dbReference type="PDB" id="2FF6">
    <property type="method" value="X-ray"/>
    <property type="resolution" value="2.05 A"/>
    <property type="chains" value="G=52-179"/>
</dbReference>
<dbReference type="PDB" id="2FH1">
    <property type="method" value="X-ray"/>
    <property type="resolution" value="1.55 A"/>
    <property type="chains" value="A/B/C=439-782"/>
</dbReference>
<dbReference type="PDB" id="2FH2">
    <property type="method" value="X-ray"/>
    <property type="resolution" value="2.50 A"/>
    <property type="chains" value="A/B/C=439-782"/>
</dbReference>
<dbReference type="PDB" id="2FH3">
    <property type="method" value="X-ray"/>
    <property type="resolution" value="2.87 A"/>
    <property type="chains" value="A/B/C=439-782"/>
</dbReference>
<dbReference type="PDB" id="2FH4">
    <property type="method" value="X-ray"/>
    <property type="resolution" value="3.00 A"/>
    <property type="chains" value="A/B/C=439-782"/>
</dbReference>
<dbReference type="PDB" id="3A5L">
    <property type="method" value="X-ray"/>
    <property type="resolution" value="2.40 A"/>
    <property type="chains" value="S=53-176"/>
</dbReference>
<dbReference type="PDB" id="3A5M">
    <property type="method" value="X-ray"/>
    <property type="resolution" value="2.40 A"/>
    <property type="chains" value="S=53-176"/>
</dbReference>
<dbReference type="PDB" id="3A5N">
    <property type="method" value="X-ray"/>
    <property type="resolution" value="2.36 A"/>
    <property type="chains" value="S=53-176"/>
</dbReference>
<dbReference type="PDB" id="3A5O">
    <property type="method" value="X-ray"/>
    <property type="resolution" value="2.40 A"/>
    <property type="chains" value="S=53-176"/>
</dbReference>
<dbReference type="PDB" id="3CI5">
    <property type="method" value="X-ray"/>
    <property type="resolution" value="1.70 A"/>
    <property type="chains" value="G=52-176"/>
</dbReference>
<dbReference type="PDB" id="3CIP">
    <property type="method" value="X-ray"/>
    <property type="resolution" value="1.60 A"/>
    <property type="chains" value="G=52-176"/>
</dbReference>
<dbReference type="PDB" id="3CJB">
    <property type="method" value="X-ray"/>
    <property type="resolution" value="3.21 A"/>
    <property type="chains" value="G=52-176"/>
</dbReference>
<dbReference type="PDB" id="3CJC">
    <property type="method" value="X-ray"/>
    <property type="resolution" value="3.90 A"/>
    <property type="chains" value="G=52-176"/>
</dbReference>
<dbReference type="PDB" id="3FFK">
    <property type="method" value="X-ray"/>
    <property type="resolution" value="3.00 A"/>
    <property type="chains" value="A/D=52-426"/>
</dbReference>
<dbReference type="PDB" id="3FFN">
    <property type="method" value="X-ray"/>
    <property type="resolution" value="3.00 A"/>
    <property type="chains" value="A/B=1-782"/>
</dbReference>
<dbReference type="PDB" id="3TU5">
    <property type="method" value="X-ray"/>
    <property type="resolution" value="3.00 A"/>
    <property type="chains" value="B=53-174"/>
</dbReference>
<dbReference type="PDB" id="4PKG">
    <property type="method" value="X-ray"/>
    <property type="resolution" value="1.80 A"/>
    <property type="chains" value="G=52-176"/>
</dbReference>
<dbReference type="PDB" id="4PKH">
    <property type="method" value="X-ray"/>
    <property type="resolution" value="2.15 A"/>
    <property type="chains" value="B/E/G/J=52-176, B/E/G/J=196-260"/>
</dbReference>
<dbReference type="PDB" id="4PKI">
    <property type="method" value="X-ray"/>
    <property type="resolution" value="2.30 A"/>
    <property type="chains" value="G=52-176"/>
</dbReference>
<dbReference type="PDB" id="4S10">
    <property type="method" value="X-ray"/>
    <property type="resolution" value="2.61 A"/>
    <property type="chains" value="C/D=186-288"/>
</dbReference>
<dbReference type="PDB" id="4Z94">
    <property type="method" value="X-ray"/>
    <property type="resolution" value="2.40 A"/>
    <property type="chains" value="G=52-176"/>
</dbReference>
<dbReference type="PDB" id="5FAE">
    <property type="method" value="X-ray"/>
    <property type="resolution" value="1.70 A"/>
    <property type="chains" value="A=178-293"/>
</dbReference>
<dbReference type="PDB" id="5FAF">
    <property type="method" value="X-ray"/>
    <property type="resolution" value="1.05 A"/>
    <property type="chains" value="A=178-293"/>
</dbReference>
<dbReference type="PDB" id="5H3M">
    <property type="method" value="NMR"/>
    <property type="chains" value="A=55-187"/>
</dbReference>
<dbReference type="PDB" id="5H3N">
    <property type="method" value="NMR"/>
    <property type="chains" value="A=55-187"/>
</dbReference>
<dbReference type="PDB" id="5O2Z">
    <property type="method" value="X-ray"/>
    <property type="resolution" value="1.70 A"/>
    <property type="chains" value="A/B=178-293"/>
</dbReference>
<dbReference type="PDB" id="5UBO">
    <property type="method" value="X-ray"/>
    <property type="resolution" value="2.39 A"/>
    <property type="chains" value="S=52-178"/>
</dbReference>
<dbReference type="PDB" id="5ZZ0">
    <property type="method" value="X-ray"/>
    <property type="resolution" value="2.63 A"/>
    <property type="chains" value="A/G=55-188"/>
</dbReference>
<dbReference type="PDB" id="6H1F">
    <property type="method" value="X-ray"/>
    <property type="resolution" value="1.90 A"/>
    <property type="chains" value="B=178-293"/>
</dbReference>
<dbReference type="PDB" id="6JCO">
    <property type="method" value="X-ray"/>
    <property type="resolution" value="2.88 A"/>
    <property type="chains" value="A/B=56-782"/>
</dbReference>
<dbReference type="PDB" id="6JEG">
    <property type="method" value="X-ray"/>
    <property type="resolution" value="2.98 A"/>
    <property type="chains" value="A/B=54-782"/>
</dbReference>
<dbReference type="PDB" id="6JEH">
    <property type="method" value="X-ray"/>
    <property type="resolution" value="2.95 A"/>
    <property type="chains" value="A/B=56-782"/>
</dbReference>
<dbReference type="PDB" id="6LJE">
    <property type="method" value="X-ray"/>
    <property type="resolution" value="1.40 A"/>
    <property type="chains" value="A/B=297-397"/>
</dbReference>
<dbReference type="PDB" id="6LJF">
    <property type="method" value="X-ray"/>
    <property type="resolution" value="1.50 A"/>
    <property type="chains" value="A/B=297-397"/>
</dbReference>
<dbReference type="PDB" id="6Q9R">
    <property type="method" value="X-ray"/>
    <property type="resolution" value="2.73 A"/>
    <property type="chains" value="A/B=28-782"/>
</dbReference>
<dbReference type="PDB" id="6Q9Z">
    <property type="method" value="X-ray"/>
    <property type="resolution" value="3.80 A"/>
    <property type="chains" value="A/B=28-782"/>
</dbReference>
<dbReference type="PDB" id="6QBF">
    <property type="method" value="X-ray"/>
    <property type="resolution" value="3.50 A"/>
    <property type="chains" value="A/B=28-782"/>
</dbReference>
<dbReference type="PDB" id="6QW3">
    <property type="method" value="X-ray"/>
    <property type="resolution" value="1.30 A"/>
    <property type="chains" value="A=178-293"/>
</dbReference>
<dbReference type="PDB" id="7P2B">
    <property type="method" value="X-ray"/>
    <property type="resolution" value="3.00 A"/>
    <property type="chains" value="A/B=28-782"/>
</dbReference>
<dbReference type="PDB" id="8VIZ">
    <property type="method" value="EM"/>
    <property type="resolution" value="2.63 A"/>
    <property type="chains" value="G=52-782"/>
</dbReference>
<dbReference type="PDB" id="8VKH">
    <property type="method" value="EM"/>
    <property type="resolution" value="3.63 A"/>
    <property type="chains" value="G/H=52-782"/>
</dbReference>
<dbReference type="PDBsum" id="1C0F"/>
<dbReference type="PDBsum" id="1C0G"/>
<dbReference type="PDBsum" id="1D4X"/>
<dbReference type="PDBsum" id="1DEJ"/>
<dbReference type="PDBsum" id="1EQY"/>
<dbReference type="PDBsum" id="1ESV"/>
<dbReference type="PDBsum" id="1H1V"/>
<dbReference type="PDBsum" id="1KCQ"/>
<dbReference type="PDBsum" id="1MDU"/>
<dbReference type="PDBsum" id="1NLV"/>
<dbReference type="PDBsum" id="1NM1"/>
<dbReference type="PDBsum" id="1NMD"/>
<dbReference type="PDBsum" id="1P8X"/>
<dbReference type="PDBsum" id="1P8Z"/>
<dbReference type="PDBsum" id="1SOL"/>
<dbReference type="PDBsum" id="1T44"/>
<dbReference type="PDBsum" id="1YAG"/>
<dbReference type="PDBsum" id="1YVN"/>
<dbReference type="PDBsum" id="2FF3"/>
<dbReference type="PDBsum" id="2FF6"/>
<dbReference type="PDBsum" id="2FH1"/>
<dbReference type="PDBsum" id="2FH2"/>
<dbReference type="PDBsum" id="2FH3"/>
<dbReference type="PDBsum" id="2FH4"/>
<dbReference type="PDBsum" id="3A5L"/>
<dbReference type="PDBsum" id="3A5M"/>
<dbReference type="PDBsum" id="3A5N"/>
<dbReference type="PDBsum" id="3A5O"/>
<dbReference type="PDBsum" id="3CI5"/>
<dbReference type="PDBsum" id="3CIP"/>
<dbReference type="PDBsum" id="3CJB"/>
<dbReference type="PDBsum" id="3CJC"/>
<dbReference type="PDBsum" id="3FFK"/>
<dbReference type="PDBsum" id="3FFN"/>
<dbReference type="PDBsum" id="3TU5"/>
<dbReference type="PDBsum" id="4PKG"/>
<dbReference type="PDBsum" id="4PKH"/>
<dbReference type="PDBsum" id="4PKI"/>
<dbReference type="PDBsum" id="4S10"/>
<dbReference type="PDBsum" id="4Z94"/>
<dbReference type="PDBsum" id="5FAE"/>
<dbReference type="PDBsum" id="5FAF"/>
<dbReference type="PDBsum" id="5H3M"/>
<dbReference type="PDBsum" id="5H3N"/>
<dbReference type="PDBsum" id="5O2Z"/>
<dbReference type="PDBsum" id="5UBO"/>
<dbReference type="PDBsum" id="5ZZ0"/>
<dbReference type="PDBsum" id="6H1F"/>
<dbReference type="PDBsum" id="6JCO"/>
<dbReference type="PDBsum" id="6JEG"/>
<dbReference type="PDBsum" id="6JEH"/>
<dbReference type="PDBsum" id="6LJE"/>
<dbReference type="PDBsum" id="6LJF"/>
<dbReference type="PDBsum" id="6Q9R"/>
<dbReference type="PDBsum" id="6Q9Z"/>
<dbReference type="PDBsum" id="6QBF"/>
<dbReference type="PDBsum" id="6QW3"/>
<dbReference type="PDBsum" id="7P2B"/>
<dbReference type="PDBsum" id="8VIZ"/>
<dbReference type="PDBsum" id="8VKH"/>
<dbReference type="EMDB" id="EMD-43262"/>
<dbReference type="EMDB" id="EMD-43263"/>
<dbReference type="EMDB" id="EMD-43264"/>
<dbReference type="EMDB" id="EMD-43268"/>
<dbReference type="EMDB" id="EMD-43274"/>
<dbReference type="EMDB" id="EMD-43316"/>
<dbReference type="SASBDB" id="P06396"/>
<dbReference type="SMR" id="P06396"/>
<dbReference type="BioGRID" id="109189">
    <property type="interactions" value="222"/>
</dbReference>
<dbReference type="CORUM" id="P06396"/>
<dbReference type="DIP" id="DIP-2196N"/>
<dbReference type="FunCoup" id="P06396">
    <property type="interactions" value="990"/>
</dbReference>
<dbReference type="IntAct" id="P06396">
    <property type="interactions" value="323"/>
</dbReference>
<dbReference type="MINT" id="P06396"/>
<dbReference type="STRING" id="9606.ENSP00000362924"/>
<dbReference type="ChEMBL" id="CHEMBL4295700"/>
<dbReference type="DrugBank" id="DB09130">
    <property type="generic name" value="Copper"/>
</dbReference>
<dbReference type="DrugBank" id="DB02621">
    <property type="generic name" value="Latrunculin A"/>
</dbReference>
<dbReference type="DrugBank" id="DB01593">
    <property type="generic name" value="Zinc"/>
</dbReference>
<dbReference type="DrugBank" id="DB14487">
    <property type="generic name" value="Zinc acetate"/>
</dbReference>
<dbReference type="GlyCosmos" id="P06396">
    <property type="glycosylation" value="8 sites, 3 glycans"/>
</dbReference>
<dbReference type="GlyGen" id="P06396">
    <property type="glycosylation" value="11 sites, 5 O-linked glycans (11 sites)"/>
</dbReference>
<dbReference type="iPTMnet" id="P06396"/>
<dbReference type="MetOSite" id="P06396"/>
<dbReference type="PhosphoSitePlus" id="P06396"/>
<dbReference type="SwissPalm" id="P06396"/>
<dbReference type="BioMuta" id="GSN"/>
<dbReference type="DMDM" id="121116"/>
<dbReference type="OGP" id="P06396"/>
<dbReference type="CPTAC" id="non-CPTAC-1126"/>
<dbReference type="CPTAC" id="non-CPTAC-1127"/>
<dbReference type="jPOST" id="P06396"/>
<dbReference type="MassIVE" id="P06396"/>
<dbReference type="PaxDb" id="9606-ENSP00000362924"/>
<dbReference type="PeptideAtlas" id="P06396"/>
<dbReference type="PRIDE" id="P06396"/>
<dbReference type="ProteomicsDB" id="25596"/>
<dbReference type="ProteomicsDB" id="51897">
    <molecule id="P06396-1"/>
</dbReference>
<dbReference type="ProteomicsDB" id="51898">
    <molecule id="P06396-2"/>
</dbReference>
<dbReference type="ProteomicsDB" id="51899">
    <molecule id="P06396-3"/>
</dbReference>
<dbReference type="Pumba" id="P06396"/>
<dbReference type="ABCD" id="P06396">
    <property type="antibodies" value="5 sequenced antibodies"/>
</dbReference>
<dbReference type="Antibodypedia" id="3387">
    <property type="antibodies" value="783 antibodies from 47 providers"/>
</dbReference>
<dbReference type="CPTC" id="P06396">
    <property type="antibodies" value="4 antibodies"/>
</dbReference>
<dbReference type="DNASU" id="2934"/>
<dbReference type="Ensembl" id="ENST00000373808.8">
    <molecule id="P06396-3"/>
    <property type="protein sequence ID" value="ENSP00000362914.3"/>
    <property type="gene ID" value="ENSG00000148180.22"/>
</dbReference>
<dbReference type="Ensembl" id="ENST00000373818.8">
    <molecule id="P06396-1"/>
    <property type="protein sequence ID" value="ENSP00000362924.4"/>
    <property type="gene ID" value="ENSG00000148180.22"/>
</dbReference>
<dbReference type="Ensembl" id="ENST00000373823.7">
    <molecule id="P06396-2"/>
    <property type="protein sequence ID" value="ENSP00000362929.2"/>
    <property type="gene ID" value="ENSG00000148180.22"/>
</dbReference>
<dbReference type="Ensembl" id="ENST00000432226.7">
    <molecule id="P06396-2"/>
    <property type="protein sequence ID" value="ENSP00000404226.2"/>
    <property type="gene ID" value="ENSG00000148180.22"/>
</dbReference>
<dbReference type="Ensembl" id="ENST00000545652.6">
    <molecule id="P06396-4"/>
    <property type="protein sequence ID" value="ENSP00000445823.1"/>
    <property type="gene ID" value="ENSG00000148180.22"/>
</dbReference>
<dbReference type="GeneID" id="2934"/>
<dbReference type="KEGG" id="hsa:2934"/>
<dbReference type="MANE-Select" id="ENST00000432226.7">
    <molecule id="P06396-2"/>
    <property type="protein sequence ID" value="ENSP00000404226.2"/>
    <property type="RefSeq nucleotide sequence ID" value="NM_198252.3"/>
    <property type="RefSeq protein sequence ID" value="NP_937895.1"/>
</dbReference>
<dbReference type="UCSC" id="uc004ble.1">
    <molecule id="P06396-1"/>
    <property type="organism name" value="human"/>
</dbReference>
<dbReference type="AGR" id="HGNC:4620"/>
<dbReference type="CTD" id="2934"/>
<dbReference type="DisGeNET" id="2934"/>
<dbReference type="GeneCards" id="GSN"/>
<dbReference type="HGNC" id="HGNC:4620">
    <property type="gene designation" value="GSN"/>
</dbReference>
<dbReference type="HPA" id="ENSG00000148180">
    <property type="expression patterns" value="Tissue enhanced (heart)"/>
</dbReference>
<dbReference type="MalaCards" id="GSN"/>
<dbReference type="MIM" id="105120">
    <property type="type" value="phenotype"/>
</dbReference>
<dbReference type="MIM" id="137350">
    <property type="type" value="gene"/>
</dbReference>
<dbReference type="neXtProt" id="NX_P06396"/>
<dbReference type="OpenTargets" id="ENSG00000148180"/>
<dbReference type="Orphanet" id="85448">
    <property type="disease" value="AGel amyloidosis"/>
</dbReference>
<dbReference type="PharmGKB" id="PA29011"/>
<dbReference type="VEuPathDB" id="HostDB:ENSG00000148180"/>
<dbReference type="eggNOG" id="KOG0443">
    <property type="taxonomic scope" value="Eukaryota"/>
</dbReference>
<dbReference type="GeneTree" id="ENSGT00940000155591"/>
<dbReference type="HOGENOM" id="CLU_002568_3_2_1"/>
<dbReference type="InParanoid" id="P06396"/>
<dbReference type="OrthoDB" id="6375767at2759"/>
<dbReference type="PAN-GO" id="P06396">
    <property type="GO annotations" value="10 GO annotations based on evolutionary models"/>
</dbReference>
<dbReference type="PhylomeDB" id="P06396"/>
<dbReference type="TreeFam" id="TF313468"/>
<dbReference type="PathwayCommons" id="P06396"/>
<dbReference type="Reactome" id="R-HSA-264870">
    <property type="pathway name" value="Caspase-mediated cleavage of cytoskeletal proteins"/>
</dbReference>
<dbReference type="Reactome" id="R-HSA-6798695">
    <property type="pathway name" value="Neutrophil degranulation"/>
</dbReference>
<dbReference type="Reactome" id="R-HSA-9662361">
    <property type="pathway name" value="Sensory processing of sound by outer hair cells of the cochlea"/>
</dbReference>
<dbReference type="Reactome" id="R-HSA-977225">
    <property type="pathway name" value="Amyloid fiber formation"/>
</dbReference>
<dbReference type="SABIO-RK" id="P06396"/>
<dbReference type="SignaLink" id="P06396"/>
<dbReference type="SIGNOR" id="P06396"/>
<dbReference type="BioGRID-ORCS" id="2934">
    <property type="hits" value="11 hits in 1153 CRISPR screens"/>
</dbReference>
<dbReference type="CD-CODE" id="91857CE7">
    <property type="entry name" value="Nucleolus"/>
</dbReference>
<dbReference type="CD-CODE" id="FB4E32DD">
    <property type="entry name" value="Presynaptic clusters and postsynaptic densities"/>
</dbReference>
<dbReference type="ChiTaRS" id="GSN">
    <property type="organism name" value="human"/>
</dbReference>
<dbReference type="EvolutionaryTrace" id="P06396"/>
<dbReference type="GeneWiki" id="Gelsolin"/>
<dbReference type="GenomeRNAi" id="2934"/>
<dbReference type="Pharos" id="P06396">
    <property type="development level" value="Tbio"/>
</dbReference>
<dbReference type="PRO" id="PR:P06396"/>
<dbReference type="Proteomes" id="UP000005640">
    <property type="component" value="Chromosome 9"/>
</dbReference>
<dbReference type="RNAct" id="P06396">
    <property type="molecule type" value="protein"/>
</dbReference>
<dbReference type="Bgee" id="ENSG00000148180">
    <property type="expression patterns" value="Expressed in synovial joint and 211 other cell types or tissues"/>
</dbReference>
<dbReference type="ExpressionAtlas" id="P06396">
    <property type="expression patterns" value="baseline and differential"/>
</dbReference>
<dbReference type="GO" id="GO:0030478">
    <property type="term" value="C:actin cap"/>
    <property type="evidence" value="ECO:0000314"/>
    <property type="project" value="UniProtKB"/>
</dbReference>
<dbReference type="GO" id="GO:0015629">
    <property type="term" value="C:actin cytoskeleton"/>
    <property type="evidence" value="ECO:0000318"/>
    <property type="project" value="GO_Central"/>
</dbReference>
<dbReference type="GO" id="GO:0072562">
    <property type="term" value="C:blood microparticle"/>
    <property type="evidence" value="ECO:0007005"/>
    <property type="project" value="UniProtKB"/>
</dbReference>
<dbReference type="GO" id="GO:0030864">
    <property type="term" value="C:cortical actin cytoskeleton"/>
    <property type="evidence" value="ECO:0000314"/>
    <property type="project" value="UniProtKB"/>
</dbReference>
<dbReference type="GO" id="GO:0005737">
    <property type="term" value="C:cytoplasm"/>
    <property type="evidence" value="ECO:0000314"/>
    <property type="project" value="UniProtKB"/>
</dbReference>
<dbReference type="GO" id="GO:0005829">
    <property type="term" value="C:cytosol"/>
    <property type="evidence" value="ECO:0000314"/>
    <property type="project" value="UniProtKB"/>
</dbReference>
<dbReference type="GO" id="GO:0070062">
    <property type="term" value="C:extracellular exosome"/>
    <property type="evidence" value="ECO:0007005"/>
    <property type="project" value="UniProtKB"/>
</dbReference>
<dbReference type="GO" id="GO:0005576">
    <property type="term" value="C:extracellular region"/>
    <property type="evidence" value="ECO:0000314"/>
    <property type="project" value="UniProtKB"/>
</dbReference>
<dbReference type="GO" id="GO:0005615">
    <property type="term" value="C:extracellular space"/>
    <property type="evidence" value="ECO:0000314"/>
    <property type="project" value="UniProtKB"/>
</dbReference>
<dbReference type="GO" id="GO:1904813">
    <property type="term" value="C:ficolin-1-rich granule lumen"/>
    <property type="evidence" value="ECO:0000304"/>
    <property type="project" value="Reactome"/>
</dbReference>
<dbReference type="GO" id="GO:0005925">
    <property type="term" value="C:focal adhesion"/>
    <property type="evidence" value="ECO:0007005"/>
    <property type="project" value="UniProtKB"/>
</dbReference>
<dbReference type="GO" id="GO:0030027">
    <property type="term" value="C:lamellipodium"/>
    <property type="evidence" value="ECO:0007669"/>
    <property type="project" value="Ensembl"/>
</dbReference>
<dbReference type="GO" id="GO:0045335">
    <property type="term" value="C:phagocytic vesicle"/>
    <property type="evidence" value="ECO:0007669"/>
    <property type="project" value="Ensembl"/>
</dbReference>
<dbReference type="GO" id="GO:0005886">
    <property type="term" value="C:plasma membrane"/>
    <property type="evidence" value="ECO:0000314"/>
    <property type="project" value="UniProtKB"/>
</dbReference>
<dbReference type="GO" id="GO:0002102">
    <property type="term" value="C:podosome"/>
    <property type="evidence" value="ECO:0000314"/>
    <property type="project" value="UniProtKB"/>
</dbReference>
<dbReference type="GO" id="GO:0016528">
    <property type="term" value="C:sarcoplasm"/>
    <property type="evidence" value="ECO:0000314"/>
    <property type="project" value="UniProtKB"/>
</dbReference>
<dbReference type="GO" id="GO:0034774">
    <property type="term" value="C:secretory granule lumen"/>
    <property type="evidence" value="ECO:0000304"/>
    <property type="project" value="Reactome"/>
</dbReference>
<dbReference type="GO" id="GO:0003779">
    <property type="term" value="F:actin binding"/>
    <property type="evidence" value="ECO:0000314"/>
    <property type="project" value="UniProtKB"/>
</dbReference>
<dbReference type="GO" id="GO:0051015">
    <property type="term" value="F:actin filament binding"/>
    <property type="evidence" value="ECO:0000318"/>
    <property type="project" value="GO_Central"/>
</dbReference>
<dbReference type="GO" id="GO:0005509">
    <property type="term" value="F:calcium ion binding"/>
    <property type="evidence" value="ECO:0000315"/>
    <property type="project" value="UniProtKB"/>
</dbReference>
<dbReference type="GO" id="GO:0045159">
    <property type="term" value="F:myosin II binding"/>
    <property type="evidence" value="ECO:0000353"/>
    <property type="project" value="UniProtKB"/>
</dbReference>
<dbReference type="GO" id="GO:0036313">
    <property type="term" value="F:phosphatidylinositol 3-kinase catalytic subunit binding"/>
    <property type="evidence" value="ECO:0000353"/>
    <property type="project" value="BHF-UCL"/>
</dbReference>
<dbReference type="GO" id="GO:0005546">
    <property type="term" value="F:phosphatidylinositol-4,5-bisphosphate binding"/>
    <property type="evidence" value="ECO:0000318"/>
    <property type="project" value="GO_Central"/>
</dbReference>
<dbReference type="GO" id="GO:0051693">
    <property type="term" value="P:actin filament capping"/>
    <property type="evidence" value="ECO:0000315"/>
    <property type="project" value="UniProtKB"/>
</dbReference>
<dbReference type="GO" id="GO:0030042">
    <property type="term" value="P:actin filament depolymerization"/>
    <property type="evidence" value="ECO:0000314"/>
    <property type="project" value="BHF-UCL"/>
</dbReference>
<dbReference type="GO" id="GO:0007015">
    <property type="term" value="P:actin filament organization"/>
    <property type="evidence" value="ECO:0000316"/>
    <property type="project" value="UniProtKB"/>
</dbReference>
<dbReference type="GO" id="GO:0030041">
    <property type="term" value="P:actin filament polymerization"/>
    <property type="evidence" value="ECO:0000314"/>
    <property type="project" value="UniProtKB"/>
</dbReference>
<dbReference type="GO" id="GO:0051014">
    <property type="term" value="P:actin filament severing"/>
    <property type="evidence" value="ECO:0000314"/>
    <property type="project" value="UniProtKB"/>
</dbReference>
<dbReference type="GO" id="GO:0008154">
    <property type="term" value="P:actin polymerization or depolymerization"/>
    <property type="evidence" value="ECO:0000318"/>
    <property type="project" value="GO_Central"/>
</dbReference>
<dbReference type="GO" id="GO:1990000">
    <property type="term" value="P:amyloid fibril formation"/>
    <property type="evidence" value="ECO:0000315"/>
    <property type="project" value="UniProtKB"/>
</dbReference>
<dbReference type="GO" id="GO:0051016">
    <property type="term" value="P:barbed-end actin filament capping"/>
    <property type="evidence" value="ECO:0000318"/>
    <property type="project" value="GO_Central"/>
</dbReference>
<dbReference type="GO" id="GO:0086003">
    <property type="term" value="P:cardiac muscle cell contraction"/>
    <property type="evidence" value="ECO:0000250"/>
    <property type="project" value="BHF-UCL"/>
</dbReference>
<dbReference type="GO" id="GO:0030031">
    <property type="term" value="P:cell projection assembly"/>
    <property type="evidence" value="ECO:0000318"/>
    <property type="project" value="GO_Central"/>
</dbReference>
<dbReference type="GO" id="GO:0071346">
    <property type="term" value="P:cellular response to type II interferon"/>
    <property type="evidence" value="ECO:0007669"/>
    <property type="project" value="Ensembl"/>
</dbReference>
<dbReference type="GO" id="GO:0007417">
    <property type="term" value="P:central nervous system development"/>
    <property type="evidence" value="ECO:0000318"/>
    <property type="project" value="GO_Central"/>
</dbReference>
<dbReference type="GO" id="GO:0060271">
    <property type="term" value="P:cilium assembly"/>
    <property type="evidence" value="ECO:0000315"/>
    <property type="project" value="UniProtKB"/>
</dbReference>
<dbReference type="GO" id="GO:0097284">
    <property type="term" value="P:hepatocyte apoptotic process"/>
    <property type="evidence" value="ECO:0000315"/>
    <property type="project" value="UniProtKB"/>
</dbReference>
<dbReference type="GO" id="GO:0046597">
    <property type="term" value="P:host-mediated suppression of symbiont invasion"/>
    <property type="evidence" value="ECO:0000315"/>
    <property type="project" value="UniProtKB"/>
</dbReference>
<dbReference type="GO" id="GO:0006911">
    <property type="term" value="P:phagocytosis, engulfment"/>
    <property type="evidence" value="ECO:0000250"/>
    <property type="project" value="UniProtKB"/>
</dbReference>
<dbReference type="GO" id="GO:0051127">
    <property type="term" value="P:positive regulation of actin nucleation"/>
    <property type="evidence" value="ECO:0000315"/>
    <property type="project" value="UniProtKB"/>
</dbReference>
<dbReference type="GO" id="GO:0010628">
    <property type="term" value="P:positive regulation of gene expression"/>
    <property type="evidence" value="ECO:0000315"/>
    <property type="project" value="UniProtKB"/>
</dbReference>
<dbReference type="GO" id="GO:1902174">
    <property type="term" value="P:positive regulation of keratinocyte apoptotic process"/>
    <property type="evidence" value="ECO:0000315"/>
    <property type="project" value="UniProtKB"/>
</dbReference>
<dbReference type="GO" id="GO:1903923">
    <property type="term" value="P:positive regulation of protein processing in phagocytic vesicle"/>
    <property type="evidence" value="ECO:0000250"/>
    <property type="project" value="UniProtKB"/>
</dbReference>
<dbReference type="GO" id="GO:0031648">
    <property type="term" value="P:protein destabilization"/>
    <property type="evidence" value="ECO:0000315"/>
    <property type="project" value="UniProtKB"/>
</dbReference>
<dbReference type="GO" id="GO:1903903">
    <property type="term" value="P:regulation of establishment of T cell polarity"/>
    <property type="evidence" value="ECO:0000315"/>
    <property type="project" value="UniProtKB"/>
</dbReference>
<dbReference type="GO" id="GO:1903906">
    <property type="term" value="P:regulation of plasma membrane raft polarization"/>
    <property type="evidence" value="ECO:0000315"/>
    <property type="project" value="UniProtKB"/>
</dbReference>
<dbReference type="GO" id="GO:0071801">
    <property type="term" value="P:regulation of podosome assembly"/>
    <property type="evidence" value="ECO:0000315"/>
    <property type="project" value="UniProtKB"/>
</dbReference>
<dbReference type="GO" id="GO:1903909">
    <property type="term" value="P:regulation of receptor clustering"/>
    <property type="evidence" value="ECO:0000315"/>
    <property type="project" value="UniProtKB"/>
</dbReference>
<dbReference type="GO" id="GO:0055119">
    <property type="term" value="P:relaxation of cardiac muscle"/>
    <property type="evidence" value="ECO:0000250"/>
    <property type="project" value="BHF-UCL"/>
</dbReference>
<dbReference type="GO" id="GO:0097017">
    <property type="term" value="P:renal protein absorption"/>
    <property type="evidence" value="ECO:0000315"/>
    <property type="project" value="UniProtKB"/>
</dbReference>
<dbReference type="GO" id="GO:0035994">
    <property type="term" value="P:response to muscle stretch"/>
    <property type="evidence" value="ECO:0000250"/>
    <property type="project" value="BHF-UCL"/>
</dbReference>
<dbReference type="GO" id="GO:0014891">
    <property type="term" value="P:striated muscle atrophy"/>
    <property type="evidence" value="ECO:0000315"/>
    <property type="project" value="UniProtKB"/>
</dbReference>
<dbReference type="CDD" id="cd11290">
    <property type="entry name" value="gelsolin_S1_like"/>
    <property type="match status" value="1"/>
</dbReference>
<dbReference type="CDD" id="cd11289">
    <property type="entry name" value="gelsolin_S2_like"/>
    <property type="match status" value="1"/>
</dbReference>
<dbReference type="CDD" id="cd11292">
    <property type="entry name" value="gelsolin_S3_like"/>
    <property type="match status" value="1"/>
</dbReference>
<dbReference type="CDD" id="cd11293">
    <property type="entry name" value="gelsolin_S4_like"/>
    <property type="match status" value="1"/>
</dbReference>
<dbReference type="CDD" id="cd11288">
    <property type="entry name" value="gelsolin_S5_like"/>
    <property type="match status" value="1"/>
</dbReference>
<dbReference type="CDD" id="cd11291">
    <property type="entry name" value="gelsolin_S6_like"/>
    <property type="match status" value="1"/>
</dbReference>
<dbReference type="FunFam" id="3.40.20.10:FF:000001">
    <property type="entry name" value="Gelsolin"/>
    <property type="match status" value="1"/>
</dbReference>
<dbReference type="FunFam" id="3.40.20.10:FF:000002">
    <property type="entry name" value="Gelsolin"/>
    <property type="match status" value="1"/>
</dbReference>
<dbReference type="FunFam" id="3.40.20.10:FF:000004">
    <property type="entry name" value="Gelsolin"/>
    <property type="match status" value="1"/>
</dbReference>
<dbReference type="FunFam" id="3.40.20.10:FF:000005">
    <property type="entry name" value="Gelsolin"/>
    <property type="match status" value="1"/>
</dbReference>
<dbReference type="FunFam" id="3.40.20.10:FF:000009">
    <property type="entry name" value="gelsolin isoform X1"/>
    <property type="match status" value="1"/>
</dbReference>
<dbReference type="FunFam" id="3.40.20.10:FF:000008">
    <property type="entry name" value="gelsolin isoform X2"/>
    <property type="match status" value="1"/>
</dbReference>
<dbReference type="Gene3D" id="3.40.20.10">
    <property type="entry name" value="Severin"/>
    <property type="match status" value="6"/>
</dbReference>
<dbReference type="IDEAL" id="IID00265"/>
<dbReference type="InterPro" id="IPR029006">
    <property type="entry name" value="ADF-H/Gelsolin-like_dom_sf"/>
</dbReference>
<dbReference type="InterPro" id="IPR007123">
    <property type="entry name" value="Gelsolin-like_dom"/>
</dbReference>
<dbReference type="InterPro" id="IPR007122">
    <property type="entry name" value="Villin/Gelsolin"/>
</dbReference>
<dbReference type="PANTHER" id="PTHR11977:SF29">
    <property type="entry name" value="GELSOLIN"/>
    <property type="match status" value="1"/>
</dbReference>
<dbReference type="PANTHER" id="PTHR11977">
    <property type="entry name" value="VILLIN"/>
    <property type="match status" value="1"/>
</dbReference>
<dbReference type="Pfam" id="PF00626">
    <property type="entry name" value="Gelsolin"/>
    <property type="match status" value="6"/>
</dbReference>
<dbReference type="PRINTS" id="PR00597">
    <property type="entry name" value="GELSOLIN"/>
</dbReference>
<dbReference type="SMART" id="SM00262">
    <property type="entry name" value="GEL"/>
    <property type="match status" value="6"/>
</dbReference>
<dbReference type="SUPFAM" id="SSF55753">
    <property type="entry name" value="Actin depolymerizing proteins"/>
    <property type="match status" value="6"/>
</dbReference>
<comment type="function">
    <text evidence="10 11">Calcium-regulated, actin-modulating protein that binds to the plus (or barbed) ends of actin monomers or filaments, preventing monomer exchange (end-blocking or capping). It can promote the assembly of monomers into filaments (nucleation) as well as sever filaments already formed (PubMed:19666512). Plays a role in ciliogenesis (PubMed:20393563).</text>
</comment>
<comment type="subunit">
    <text evidence="1 2">Binds to actin and to fibronectin. Identified in a complex composed of ACTA1, COBL, GSN and TMSB4X. Interacts with the inactive form of EIF2AK2/PKR (By similarity). Interacts with FLII (By similarity).</text>
</comment>
<comment type="interaction">
    <interactant intactId="EBI-351506">
        <id>P06396</id>
    </interactant>
    <interactant intactId="EBI-12811089">
        <id>Q8NC06-3</id>
        <label>ACBD4</label>
    </interactant>
    <organismsDiffer>false</organismsDiffer>
    <experiments>3</experiments>
</comment>
<comment type="interaction">
    <interactant intactId="EBI-351506">
        <id>P06396</id>
    </interactant>
    <interactant intactId="EBI-10173507">
        <id>Q6UY14-3</id>
        <label>ADAMTSL4</label>
    </interactant>
    <organismsDiffer>false</organismsDiffer>
    <experiments>3</experiments>
</comment>
<comment type="interaction">
    <interactant intactId="EBI-351506">
        <id>P06396</id>
    </interactant>
    <interactant intactId="EBI-25838028">
        <id>Q8N302-2</id>
        <label>AGGF1</label>
    </interactant>
    <organismsDiffer>false</organismsDiffer>
    <experiments>3</experiments>
</comment>
<comment type="interaction">
    <interactant intactId="EBI-351506">
        <id>P06396</id>
    </interactant>
    <interactant intactId="EBI-9031341">
        <id>P55008</id>
        <label>AIF1</label>
    </interactant>
    <organismsDiffer>false</organismsDiffer>
    <experiments>3</experiments>
</comment>
<comment type="interaction">
    <interactant intactId="EBI-351506">
        <id>P06396</id>
    </interactant>
    <interactant intactId="EBI-11022349">
        <id>Q99996-3</id>
        <label>AKAP9</label>
    </interactant>
    <organismsDiffer>false</organismsDiffer>
    <experiments>3</experiments>
</comment>
<comment type="interaction">
    <interactant intactId="EBI-351506">
        <id>P06396</id>
    </interactant>
    <interactant intactId="EBI-517035">
        <id>Q9NQ31</id>
        <label>AKIP1</label>
    </interactant>
    <organismsDiffer>false</organismsDiffer>
    <experiments>3</experiments>
</comment>
<comment type="interaction">
    <interactant intactId="EBI-351506">
        <id>P06396</id>
    </interactant>
    <interactant intactId="EBI-608057">
        <id>P10275</id>
        <label>AR</label>
    </interactant>
    <organismsDiffer>false</organismsDiffer>
    <experiments>2</experiments>
</comment>
<comment type="interaction">
    <interactant intactId="EBI-351506">
        <id>P06396</id>
    </interactant>
    <interactant intactId="EBI-18172597">
        <id>Q9NXL2-1</id>
        <label>ARHGEF38</label>
    </interactant>
    <organismsDiffer>false</organismsDiffer>
    <experiments>3</experiments>
</comment>
<comment type="interaction">
    <interactant intactId="EBI-351506">
        <id>P06396</id>
    </interactant>
    <interactant intactId="EBI-3449344">
        <id>Q9Y2Y0</id>
        <label>ARL2BP</label>
    </interactant>
    <organismsDiffer>false</organismsDiffer>
    <experiments>3</experiments>
</comment>
<comment type="interaction">
    <interactant intactId="EBI-351506">
        <id>P06396</id>
    </interactant>
    <interactant intactId="EBI-743313">
        <id>P49407</id>
        <label>ARRB1</label>
    </interactant>
    <organismsDiffer>false</organismsDiffer>
    <experiments>3</experiments>
</comment>
<comment type="interaction">
    <interactant intactId="EBI-351506">
        <id>P06396</id>
    </interactant>
    <interactant intactId="EBI-714559">
        <id>P32121</id>
        <label>ARRB2</label>
    </interactant>
    <organismsDiffer>false</organismsDiffer>
    <experiments>3</experiments>
</comment>
<comment type="interaction">
    <interactant intactId="EBI-351506">
        <id>P06396</id>
    </interactant>
    <interactant intactId="EBI-9089489">
        <id>Q96FT7-4</id>
        <label>ASIC4</label>
    </interactant>
    <organismsDiffer>false</organismsDiffer>
    <experiments>3</experiments>
</comment>
<comment type="interaction">
    <interactant intactId="EBI-351506">
        <id>P06396</id>
    </interactant>
    <interactant intactId="EBI-718459">
        <id>Q9UII2</id>
        <label>ATP5IF1</label>
    </interactant>
    <organismsDiffer>false</organismsDiffer>
    <experiments>3</experiments>
</comment>
<comment type="interaction">
    <interactant intactId="EBI-351506">
        <id>P06396</id>
    </interactant>
    <interactant intactId="EBI-21568482">
        <id>Q9ULK2-2</id>
        <label>ATXN7L1</label>
    </interactant>
    <organismsDiffer>false</organismsDiffer>
    <experiments>3</experiments>
</comment>
<comment type="interaction">
    <interactant intactId="EBI-351506">
        <id>P06396</id>
    </interactant>
    <interactant intactId="EBI-10693257">
        <id>Q9H7T9</id>
        <label>AUNIP</label>
    </interactant>
    <organismsDiffer>false</organismsDiffer>
    <experiments>3</experiments>
</comment>
<comment type="interaction">
    <interactant intactId="EBI-351506">
        <id>P06396</id>
    </interactant>
    <interactant intactId="EBI-742750">
        <id>Q8TBE0</id>
        <label>BAHD1</label>
    </interactant>
    <organismsDiffer>false</organismsDiffer>
    <experiments>3</experiments>
</comment>
<comment type="interaction">
    <interactant intactId="EBI-351506">
        <id>P06396</id>
    </interactant>
    <interactant intactId="EBI-749503">
        <id>Q16520</id>
        <label>BATF</label>
    </interactant>
    <organismsDiffer>false</organismsDiffer>
    <experiments>3</experiments>
</comment>
<comment type="interaction">
    <interactant intactId="EBI-351506">
        <id>P06396</id>
    </interactant>
    <interactant intactId="EBI-25834445">
        <id>P54687-4</id>
        <label>BCAT1</label>
    </interactant>
    <organismsDiffer>false</organismsDiffer>
    <experiments>3</experiments>
</comment>
<comment type="interaction">
    <interactant intactId="EBI-351506">
        <id>P06396</id>
    </interactant>
    <interactant intactId="EBI-10243741">
        <id>Q5H9J7</id>
        <label>BEX5</label>
    </interactant>
    <organismsDiffer>false</organismsDiffer>
    <experiments>3</experiments>
</comment>
<comment type="interaction">
    <interactant intactId="EBI-351506">
        <id>P06396</id>
    </interactant>
    <interactant intactId="EBI-2548012">
        <id>Q9H2G9</id>
        <label>BLZF1</label>
    </interactant>
    <organismsDiffer>false</organismsDiffer>
    <experiments>3</experiments>
</comment>
<comment type="interaction">
    <interactant intactId="EBI-351506">
        <id>P06396</id>
    </interactant>
    <interactant intactId="EBI-23662416">
        <id>Q9ULD4-2</id>
        <label>BRPF3</label>
    </interactant>
    <organismsDiffer>false</organismsDiffer>
    <experiments>3</experiments>
</comment>
<comment type="interaction">
    <interactant intactId="EBI-351506">
        <id>P06396</id>
    </interactant>
    <interactant intactId="EBI-18036948">
        <id>Q3SXR2</id>
        <label>C3orf36</label>
    </interactant>
    <organismsDiffer>false</organismsDiffer>
    <experiments>3</experiments>
</comment>
<comment type="interaction">
    <interactant intactId="EBI-351506">
        <id>P06396</id>
    </interactant>
    <interactant intactId="EBI-11532021">
        <id>P20807-4</id>
        <label>CAPN3</label>
    </interactant>
    <organismsDiffer>false</organismsDiffer>
    <experiments>3</experiments>
</comment>
<comment type="interaction">
    <interactant intactId="EBI-351506">
        <id>P06396</id>
    </interactant>
    <interactant intactId="EBI-4392727">
        <id>O00257-3</id>
        <label>CBX4</label>
    </interactant>
    <organismsDiffer>false</organismsDiffer>
    <experiments>3</experiments>
</comment>
<comment type="interaction">
    <interactant intactId="EBI-351506">
        <id>P06396</id>
    </interactant>
    <interactant intactId="EBI-12105646">
        <id>Q49A88-3</id>
        <label>CCDC14</label>
    </interactant>
    <organismsDiffer>false</organismsDiffer>
    <experiments>3</experiments>
</comment>
<comment type="interaction">
    <interactant intactId="EBI-351506">
        <id>P06396</id>
    </interactant>
    <interactant intactId="EBI-49119542">
        <id>Q6ZP82-1</id>
        <label>CCDC141</label>
    </interactant>
    <organismsDiffer>false</organismsDiffer>
    <experiments>3</experiments>
</comment>
<comment type="interaction">
    <interactant intactId="EBI-351506">
        <id>P06396</id>
    </interactant>
    <interactant intactId="EBI-25863768">
        <id>O95388-2</id>
        <label>CCN4</label>
    </interactant>
    <organismsDiffer>false</organismsDiffer>
    <experiments>3</experiments>
</comment>
<comment type="interaction">
    <interactant intactId="EBI-351506">
        <id>P06396</id>
    </interactant>
    <interactant intactId="EBI-375096">
        <id>P24941</id>
        <label>CDK2</label>
    </interactant>
    <organismsDiffer>false</organismsDiffer>
    <experiments>3</experiments>
</comment>
<comment type="interaction">
    <interactant intactId="EBI-351506">
        <id>P06396</id>
    </interactant>
    <interactant intactId="EBI-375077">
        <id>P38936</id>
        <label>CDKN1A</label>
    </interactant>
    <organismsDiffer>false</organismsDiffer>
    <experiments>3</experiments>
</comment>
<comment type="interaction">
    <interactant intactId="EBI-351506">
        <id>P06396</id>
    </interactant>
    <interactant intactId="EBI-3913685">
        <id>O95674</id>
        <label>CDS2</label>
    </interactant>
    <organismsDiffer>false</organismsDiffer>
    <experiments>3</experiments>
</comment>
<comment type="interaction">
    <interactant intactId="EBI-351506">
        <id>P06396</id>
    </interactant>
    <interactant intactId="EBI-749253">
        <id>Q8WUX9</id>
        <label>CHMP7</label>
    </interactant>
    <organismsDiffer>false</organismsDiffer>
    <experiments>3</experiments>
</comment>
<comment type="interaction">
    <interactant intactId="EBI-351506">
        <id>P06396</id>
    </interactant>
    <interactant intactId="EBI-21642354">
        <id>Q9H2A9</id>
        <label>CHST8</label>
    </interactant>
    <organismsDiffer>false</organismsDiffer>
    <experiments>3</experiments>
</comment>
<comment type="interaction">
    <interactant intactId="EBI-351506">
        <id>P06396</id>
    </interactant>
    <interactant intactId="EBI-744045">
        <id>Q9Y3D0</id>
        <label>CIAO2B</label>
    </interactant>
    <organismsDiffer>false</organismsDiffer>
    <experiments>3</experiments>
</comment>
<comment type="interaction">
    <interactant intactId="EBI-351506">
        <id>P06396</id>
    </interactant>
    <interactant intactId="EBI-25864451">
        <id>Q96NS8</id>
        <label>CLUHP3</label>
    </interactant>
    <organismsDiffer>false</organismsDiffer>
    <experiments>3</experiments>
</comment>
<comment type="interaction">
    <interactant intactId="EBI-351506">
        <id>P06396</id>
    </interactant>
    <interactant intactId="EBI-6269632">
        <id>Q96BR5</id>
        <label>COA7</label>
    </interactant>
    <organismsDiffer>false</organismsDiffer>
    <experiments>3</experiments>
</comment>
<comment type="interaction">
    <interactant intactId="EBI-351506">
        <id>P06396</id>
    </interactant>
    <interactant intactId="EBI-12375799">
        <id>P02458-1</id>
        <label>COL2A1</label>
    </interactant>
    <organismsDiffer>false</organismsDiffer>
    <experiments>3</experiments>
</comment>
<comment type="interaction">
    <interactant intactId="EBI-351506">
        <id>P06396</id>
    </interactant>
    <interactant intactId="EBI-10200977">
        <id>P21964-2</id>
        <label>COMT</label>
    </interactant>
    <organismsDiffer>false</organismsDiffer>
    <experiments>3</experiments>
</comment>
<comment type="interaction">
    <interactant intactId="EBI-351506">
        <id>P06396</id>
    </interactant>
    <interactant intactId="EBI-751783">
        <id>Q9UJU6</id>
        <label>DBNL</label>
    </interactant>
    <organismsDiffer>false</organismsDiffer>
    <experiments>3</experiments>
</comment>
<comment type="interaction">
    <interactant intactId="EBI-351506">
        <id>P06396</id>
    </interactant>
    <interactant intactId="EBI-529989">
        <id>Q9NRI5</id>
        <label>DISC1</label>
    </interactant>
    <organismsDiffer>false</organismsDiffer>
    <experiments>2</experiments>
</comment>
<comment type="interaction">
    <interactant intactId="EBI-351506">
        <id>P06396</id>
    </interactant>
    <interactant intactId="EBI-25842538">
        <id>Q8NDP9</id>
        <label>DKFZp547K2416</label>
    </interactant>
    <organismsDiffer>false</organismsDiffer>
    <experiments>3</experiments>
</comment>
<comment type="interaction">
    <interactant intactId="EBI-351506">
        <id>P06396</id>
    </interactant>
    <interactant intactId="EBI-11526226">
        <id>Q96EY1-3</id>
        <label>DNAJA3</label>
    </interactant>
    <organismsDiffer>false</organismsDiffer>
    <experiments>3</experiments>
</comment>
<comment type="interaction">
    <interactant intactId="EBI-351506">
        <id>P06396</id>
    </interactant>
    <interactant intactId="EBI-23669343">
        <id>Q92782-2</id>
        <label>DPF1</label>
    </interactant>
    <organismsDiffer>false</organismsDiffer>
    <experiments>3</experiments>
</comment>
<comment type="interaction">
    <interactant intactId="EBI-351506">
        <id>P06396</id>
    </interactant>
    <interactant intactId="EBI-741400">
        <id>Q7Z7J5</id>
        <label>DPPA2</label>
    </interactant>
    <organismsDiffer>false</organismsDiffer>
    <experiments>3</experiments>
</comment>
<comment type="interaction">
    <interactant intactId="EBI-351506">
        <id>P06396</id>
    </interactant>
    <interactant intactId="EBI-12275416">
        <id>Q14117</id>
        <label>DPYS</label>
    </interactant>
    <organismsDiffer>false</organismsDiffer>
    <experiments>3</experiments>
</comment>
<comment type="interaction">
    <interactant intactId="EBI-351506">
        <id>P06396</id>
    </interactant>
    <interactant intactId="EBI-724653">
        <id>Q9BPU6</id>
        <label>DPYSL5</label>
    </interactant>
    <organismsDiffer>false</organismsDiffer>
    <experiments>3</experiments>
</comment>
<comment type="interaction">
    <interactant intactId="EBI-351506">
        <id>P06396</id>
    </interactant>
    <interactant intactId="EBI-3443946">
        <id>Q9Y6W6</id>
        <label>DUSP10</label>
    </interactant>
    <organismsDiffer>false</organismsDiffer>
    <experiments>3</experiments>
</comment>
<comment type="interaction">
    <interactant intactId="EBI-351506">
        <id>P06396</id>
    </interactant>
    <interactant intactId="EBI-7779316">
        <id>A0AVK6</id>
        <label>E2F8</label>
    </interactant>
    <organismsDiffer>false</organismsDiffer>
    <experiments>3</experiments>
</comment>
<comment type="interaction">
    <interactant intactId="EBI-351506">
        <id>P06396</id>
    </interactant>
    <interactant intactId="EBI-395274">
        <id>O00472</id>
        <label>ELL2</label>
    </interactant>
    <organismsDiffer>false</organismsDiffer>
    <experiments>3</experiments>
</comment>
<comment type="interaction">
    <interactant intactId="EBI-351506">
        <id>P06396</id>
    </interactant>
    <interactant intactId="EBI-11793142">
        <id>Q96GL9</id>
        <label>FAM163A</label>
    </interactant>
    <organismsDiffer>false</organismsDiffer>
    <experiments>3</experiments>
</comment>
<comment type="interaction">
    <interactant intactId="EBI-351506">
        <id>P06396</id>
    </interactant>
    <interactant intactId="EBI-9917523">
        <id>Q8NB25</id>
        <label>FAM184A</label>
    </interactant>
    <organismsDiffer>false</organismsDiffer>
    <experiments>3</experiments>
</comment>
<comment type="interaction">
    <interactant intactId="EBI-351506">
        <id>P06396</id>
    </interactant>
    <interactant intactId="EBI-1384254">
        <id>Q86UY5</id>
        <label>FAM83A</label>
    </interactant>
    <organismsDiffer>false</organismsDiffer>
    <experiments>3</experiments>
</comment>
<comment type="interaction">
    <interactant intactId="EBI-351506">
        <id>P06396</id>
    </interactant>
    <interactant intactId="EBI-11958845">
        <id>O94868-3</id>
        <label>FCHSD2</label>
    </interactant>
    <organismsDiffer>false</organismsDiffer>
    <experiments>3</experiments>
</comment>
<comment type="interaction">
    <interactant intactId="EBI-351506">
        <id>P06396</id>
    </interactant>
    <interactant intactId="EBI-744510">
        <id>P15407</id>
        <label>FOSL1</label>
    </interactant>
    <organismsDiffer>false</organismsDiffer>
    <experiments>3</experiments>
</comment>
<comment type="interaction">
    <interactant intactId="EBI-351506">
        <id>P06396</id>
    </interactant>
    <interactant intactId="EBI-3893419">
        <id>P15408</id>
        <label>FOSL2</label>
    </interactant>
    <organismsDiffer>false</organismsDiffer>
    <experiments>3</experiments>
</comment>
<comment type="interaction">
    <interactant intactId="EBI-351506">
        <id>P06396</id>
    </interactant>
    <interactant intactId="EBI-9088619">
        <id>Q06547-3</id>
        <label>GABPB1</label>
    </interactant>
    <organismsDiffer>false</organismsDiffer>
    <experiments>3</experiments>
</comment>
<comment type="interaction">
    <interactant intactId="EBI-351506">
        <id>P06396</id>
    </interactant>
    <interactant intactId="EBI-9090198">
        <id>P15976-2</id>
        <label>GATA1</label>
    </interactant>
    <organismsDiffer>false</organismsDiffer>
    <experiments>3</experiments>
</comment>
<comment type="interaction">
    <interactant intactId="EBI-351506">
        <id>P06396</id>
    </interactant>
    <interactant intactId="EBI-712457">
        <id>Q15486</id>
        <label>GUSBP1</label>
    </interactant>
    <organismsDiffer>false</organismsDiffer>
    <experiments>3</experiments>
</comment>
<comment type="interaction">
    <interactant intactId="EBI-351506">
        <id>P06396</id>
    </interactant>
    <interactant intactId="EBI-2514791">
        <id>Q96CS2</id>
        <label>HAUS1</label>
    </interactant>
    <organismsDiffer>false</organismsDiffer>
    <experiments>3</experiments>
</comment>
<comment type="interaction">
    <interactant intactId="EBI-351506">
        <id>P06396</id>
    </interactant>
    <interactant intactId="EBI-7211558">
        <id>Q99075</id>
        <label>HBEGF</label>
    </interactant>
    <organismsDiffer>false</organismsDiffer>
    <experiments>3</experiments>
</comment>
<comment type="interaction">
    <interactant intactId="EBI-351506">
        <id>P06396</id>
    </interactant>
    <interactant intactId="EBI-25843825">
        <id>A8K0U2</id>
        <label>hCG_2001421</label>
    </interactant>
    <organismsDiffer>false</organismsDiffer>
    <experiments>3</experiments>
</comment>
<comment type="interaction">
    <interactant intactId="EBI-351506">
        <id>P06396</id>
    </interactant>
    <interactant intactId="EBI-25854793">
        <id>Q5T447-2</id>
        <label>HECTD3</label>
    </interactant>
    <organismsDiffer>false</organismsDiffer>
    <experiments>3</experiments>
</comment>
<comment type="interaction">
    <interactant intactId="EBI-351506">
        <id>P06396</id>
    </interactant>
    <interactant intactId="EBI-11335623">
        <id>Q53T59</id>
        <label>HS1BP3</label>
    </interactant>
    <organismsDiffer>false</organismsDiffer>
    <experiments>3</experiments>
</comment>
<comment type="interaction">
    <interactant intactId="EBI-351506">
        <id>P06396</id>
    </interactant>
    <interactant intactId="EBI-2963255">
        <id>Q53GQ0</id>
        <label>HSD17B12</label>
    </interactant>
    <organismsDiffer>false</organismsDiffer>
    <experiments>3</experiments>
</comment>
<comment type="interaction">
    <interactant intactId="EBI-351506">
        <id>P06396</id>
    </interactant>
    <interactant intactId="EBI-17426018">
        <id>P14060</id>
        <label>HSD3B1</label>
    </interactant>
    <organismsDiffer>false</organismsDiffer>
    <experiments>3</experiments>
</comment>
<comment type="interaction">
    <interactant intactId="EBI-351506">
        <id>P06396</id>
    </interactant>
    <interactant intactId="EBI-25835621">
        <id>Q96EW2-2</id>
        <label>HSPBAP1</label>
    </interactant>
    <organismsDiffer>false</organismsDiffer>
    <experiments>3</experiments>
</comment>
<comment type="interaction">
    <interactant intactId="EBI-351506">
        <id>P06396</id>
    </interactant>
    <interactant intactId="EBI-1215527">
        <id>P41134</id>
        <label>ID1</label>
    </interactant>
    <organismsDiffer>false</organismsDiffer>
    <experiments>3</experiments>
</comment>
<comment type="interaction">
    <interactant intactId="EBI-351506">
        <id>P06396</id>
    </interactant>
    <interactant intactId="EBI-11742277">
        <id>Q8IY31-2</id>
        <label>IFT20</label>
    </interactant>
    <organismsDiffer>false</organismsDiffer>
    <experiments>3</experiments>
</comment>
<comment type="interaction">
    <interactant intactId="EBI-351506">
        <id>P06396</id>
    </interactant>
    <interactant intactId="EBI-2831948">
        <id>P22692</id>
        <label>IGFBP4</label>
    </interactant>
    <organismsDiffer>false</organismsDiffer>
    <experiments>3</experiments>
</comment>
<comment type="interaction">
    <interactant intactId="EBI-351506">
        <id>P06396</id>
    </interactant>
    <interactant intactId="EBI-3862125">
        <id>Q9NZH6</id>
        <label>IL37</label>
    </interactant>
    <organismsDiffer>false</organismsDiffer>
    <experiments>3</experiments>
</comment>
<comment type="interaction">
    <interactant intactId="EBI-351506">
        <id>P06396</id>
    </interactant>
    <interactant intactId="EBI-743980">
        <id>Q9NXX0</id>
        <label>ILF3</label>
    </interactant>
    <organismsDiffer>false</organismsDiffer>
    <experiments>3</experiments>
</comment>
<comment type="interaction">
    <interactant intactId="EBI-351506">
        <id>P06396</id>
    </interactant>
    <interactant intactId="EBI-1237354">
        <id>Q86VI3</id>
        <label>IQGAP3</label>
    </interactant>
    <organismsDiffer>false</organismsDiffer>
    <experiments>3</experiments>
</comment>
<comment type="interaction">
    <interactant intactId="EBI-351506">
        <id>P06396</id>
    </interactant>
    <interactant intactId="EBI-10220600">
        <id>Q8NA54</id>
        <label>IQUB</label>
    </interactant>
    <organismsDiffer>false</organismsDiffer>
    <experiments>3</experiments>
</comment>
<comment type="interaction">
    <interactant intactId="EBI-351506">
        <id>P06396</id>
    </interactant>
    <interactant intactId="EBI-10258659">
        <id>Q86U28</id>
        <label>ISCA2</label>
    </interactant>
    <organismsDiffer>false</organismsDiffer>
    <experiments>3</experiments>
</comment>
<comment type="interaction">
    <interactant intactId="EBI-351506">
        <id>P06396</id>
    </interactant>
    <interactant intactId="EBI-25863618">
        <id>P28290-2</id>
        <label>ITPRID2</label>
    </interactant>
    <organismsDiffer>false</organismsDiffer>
    <experiments>3</experiments>
</comment>
<comment type="interaction">
    <interactant intactId="EBI-351506">
        <id>P06396</id>
    </interactant>
    <interactant intactId="EBI-852823">
        <id>P05412</id>
        <label>JUN</label>
    </interactant>
    <organismsDiffer>false</organismsDiffer>
    <experiments>3</experiments>
</comment>
<comment type="interaction">
    <interactant intactId="EBI-351506">
        <id>P06396</id>
    </interactant>
    <interactant intactId="EBI-743960">
        <id>Q8N5Z5</id>
        <label>KCTD17</label>
    </interactant>
    <organismsDiffer>false</organismsDiffer>
    <experiments>3</experiments>
</comment>
<comment type="interaction">
    <interactant intactId="EBI-351506">
        <id>P06396</id>
    </interactant>
    <interactant intactId="EBI-9089060">
        <id>Q7Z7F0-4</id>
        <label>KHDC4</label>
    </interactant>
    <organismsDiffer>false</organismsDiffer>
    <experiments>3</experiments>
</comment>
<comment type="interaction">
    <interactant intactId="EBI-351506">
        <id>P06396</id>
    </interactant>
    <interactant intactId="EBI-714379">
        <id>Q9Y2M5</id>
        <label>KLHL20</label>
    </interactant>
    <organismsDiffer>false</organismsDiffer>
    <experiments>3</experiments>
</comment>
<comment type="interaction">
    <interactant intactId="EBI-351506">
        <id>P06396</id>
    </interactant>
    <interactant intactId="EBI-8524663">
        <id>Q9UH77</id>
        <label>KLHL3</label>
    </interactant>
    <organismsDiffer>false</organismsDiffer>
    <experiments>3</experiments>
</comment>
<comment type="interaction">
    <interactant intactId="EBI-351506">
        <id>P06396</id>
    </interactant>
    <interactant intactId="EBI-742756">
        <id>P08727</id>
        <label>KRT19</label>
    </interactant>
    <organismsDiffer>false</organismsDiffer>
    <experiments>3</experiments>
</comment>
<comment type="interaction">
    <interactant intactId="EBI-351506">
        <id>P06396</id>
    </interactant>
    <interactant intactId="EBI-1049638">
        <id>Q14525</id>
        <label>KRT33B</label>
    </interactant>
    <organismsDiffer>false</organismsDiffer>
    <experiments>3</experiments>
</comment>
<comment type="interaction">
    <interactant intactId="EBI-351506">
        <id>P06396</id>
    </interactant>
    <interactant intactId="EBI-1048945">
        <id>Q3LI72</id>
        <label>KRTAP19-5</label>
    </interactant>
    <organismsDiffer>false</organismsDiffer>
    <experiments>3</experiments>
</comment>
<comment type="interaction">
    <interactant intactId="EBI-351506">
        <id>P06396</id>
    </interactant>
    <interactant intactId="EBI-10241353">
        <id>Q3SYF9</id>
        <label>KRTAP19-7</label>
    </interactant>
    <organismsDiffer>false</organismsDiffer>
    <experiments>3</experiments>
</comment>
<comment type="interaction">
    <interactant intactId="EBI-351506">
        <id>P06396</id>
    </interactant>
    <interactant intactId="EBI-715385">
        <id>Q6IAA8</id>
        <label>LAMTOR1</label>
    </interactant>
    <organismsDiffer>false</organismsDiffer>
    <experiments>3</experiments>
</comment>
<comment type="interaction">
    <interactant intactId="EBI-351506">
        <id>P06396</id>
    </interactant>
    <interactant intactId="EBI-713382">
        <id>O43504</id>
        <label>LAMTOR5</label>
    </interactant>
    <organismsDiffer>false</organismsDiffer>
    <experiments>3</experiments>
</comment>
<comment type="interaction">
    <interactant intactId="EBI-351506">
        <id>P06396</id>
    </interactant>
    <interactant intactId="EBI-9088686">
        <id>Q14847-2</id>
        <label>LASP1</label>
    </interactant>
    <organismsDiffer>false</organismsDiffer>
    <experiments>3</experiments>
</comment>
<comment type="interaction">
    <interactant intactId="EBI-351506">
        <id>P06396</id>
    </interactant>
    <interactant intactId="EBI-25835523">
        <id>Q9H2C1</id>
        <label>LHX5</label>
    </interactant>
    <organismsDiffer>false</organismsDiffer>
    <experiments>3</experiments>
</comment>
<comment type="interaction">
    <interactant intactId="EBI-351506">
        <id>P06396</id>
    </interactant>
    <interactant intactId="EBI-10264791">
        <id>Q8N0U6</id>
        <label>LINC00518</label>
    </interactant>
    <organismsDiffer>false</organismsDiffer>
    <experiments>3</experiments>
</comment>
<comment type="interaction">
    <interactant intactId="EBI-351506">
        <id>P06396</id>
    </interactant>
    <interactant intactId="EBI-2510853">
        <id>Q1L5Z9</id>
        <label>LONRF2</label>
    </interactant>
    <organismsDiffer>false</organismsDiffer>
    <experiments>3</experiments>
</comment>
<comment type="interaction">
    <interactant intactId="EBI-351506">
        <id>P06396</id>
    </interactant>
    <interactant intactId="EBI-749562">
        <id>Q96JB6</id>
        <label>LOXL4</label>
    </interactant>
    <organismsDiffer>false</organismsDiffer>
    <experiments>3</experiments>
</comment>
<comment type="interaction">
    <interactant intactId="EBI-351506">
        <id>P06396</id>
    </interactant>
    <interactant intactId="EBI-741355">
        <id>Q96LR2</id>
        <label>LURAP1</label>
    </interactant>
    <organismsDiffer>false</organismsDiffer>
    <experiments>3</experiments>
</comment>
<comment type="interaction">
    <interactant intactId="EBI-351506">
        <id>P06396</id>
    </interactant>
    <interactant intactId="EBI-21916939">
        <id>P0DP58-2</id>
        <label>LYNX1</label>
    </interactant>
    <organismsDiffer>false</organismsDiffer>
    <experiments>3</experiments>
</comment>
<comment type="interaction">
    <interactant intactId="EBI-351506">
        <id>P06396</id>
    </interactant>
    <interactant intactId="EBI-3911344">
        <id>P27338</id>
        <label>MAOB</label>
    </interactant>
    <organismsDiffer>false</organismsDiffer>
    <experiments>3</experiments>
</comment>
<comment type="interaction">
    <interactant intactId="EBI-351506">
        <id>P06396</id>
    </interactant>
    <interactant intactId="EBI-11741465">
        <id>P33993-2</id>
        <label>MCM7</label>
    </interactant>
    <organismsDiffer>false</organismsDiffer>
    <experiments>3</experiments>
</comment>
<comment type="interaction">
    <interactant intactId="EBI-351506">
        <id>P06396</id>
    </interactant>
    <interactant intactId="EBI-348259">
        <id>Q96EZ8</id>
        <label>MCRS1</label>
    </interactant>
    <organismsDiffer>false</organismsDiffer>
    <experiments>3</experiments>
</comment>
<comment type="interaction">
    <interactant intactId="EBI-351506">
        <id>P06396</id>
    </interactant>
    <interactant intactId="EBI-2801965">
        <id>Q5JXC2</id>
        <label>MIIP</label>
    </interactant>
    <organismsDiffer>false</organismsDiffer>
    <experiments>3</experiments>
</comment>
<comment type="interaction">
    <interactant intactId="EBI-351506">
        <id>P06396</id>
    </interactant>
    <interactant intactId="EBI-25835557">
        <id>A0A0A0MR05</id>
        <label>MLST8</label>
    </interactant>
    <organismsDiffer>false</organismsDiffer>
    <experiments>3</experiments>
</comment>
<comment type="interaction">
    <interactant intactId="EBI-351506">
        <id>P06396</id>
    </interactant>
    <interactant intactId="EBI-711788">
        <id>Q00013</id>
        <label>MPP1</label>
    </interactant>
    <organismsDiffer>false</organismsDiffer>
    <experiments>3</experiments>
</comment>
<comment type="interaction">
    <interactant intactId="EBI-351506">
        <id>P06396</id>
    </interactant>
    <interactant intactId="EBI-25835707">
        <id>Q6IN84-2</id>
        <label>MRM1</label>
    </interactant>
    <organismsDiffer>false</organismsDiffer>
    <experiments>3</experiments>
</comment>
<comment type="interaction">
    <interactant intactId="EBI-351506">
        <id>P06396</id>
    </interactant>
    <interactant intactId="EBI-1045956">
        <id>O60783</id>
        <label>MRPS14</label>
    </interactant>
    <organismsDiffer>false</organismsDiffer>
    <experiments>3</experiments>
</comment>
<comment type="interaction">
    <interactant intactId="EBI-351506">
        <id>P06396</id>
    </interactant>
    <interactant intactId="EBI-8466227">
        <id>Q96H12</id>
        <label>MSANTD3</label>
    </interactant>
    <organismsDiffer>false</organismsDiffer>
    <experiments>3</experiments>
</comment>
<comment type="interaction">
    <interactant intactId="EBI-351506">
        <id>P06396</id>
    </interactant>
    <interactant intactId="EBI-447544">
        <id>P01106</id>
        <label>MYC</label>
    </interactant>
    <organismsDiffer>false</organismsDiffer>
    <experiments>3</experiments>
</comment>
<comment type="interaction">
    <interactant intactId="EBI-351506">
        <id>P06396</id>
    </interactant>
    <interactant intactId="EBI-746712">
        <id>Q9NPC6</id>
        <label>MYOZ2</label>
    </interactant>
    <organismsDiffer>false</organismsDiffer>
    <experiments>3</experiments>
</comment>
<comment type="interaction">
    <interactant intactId="EBI-351506">
        <id>P06396</id>
    </interactant>
    <interactant intactId="EBI-395044">
        <id>P14598</id>
        <label>NCF1</label>
    </interactant>
    <organismsDiffer>false</organismsDiffer>
    <experiments>3</experiments>
</comment>
<comment type="interaction">
    <interactant intactId="EBI-351506">
        <id>P06396</id>
    </interactant>
    <interactant intactId="EBI-928842">
        <id>Q9GZM8</id>
        <label>NDEL1</label>
    </interactant>
    <organismsDiffer>false</organismsDiffer>
    <experiments>3</experiments>
</comment>
<comment type="interaction">
    <interactant intactId="EBI-351506">
        <id>P06396</id>
    </interactant>
    <interactant intactId="EBI-716247">
        <id>Q15843</id>
        <label>NEDD8</label>
    </interactant>
    <organismsDiffer>false</organismsDiffer>
    <experiments>3</experiments>
</comment>
<comment type="interaction">
    <interactant intactId="EBI-351506">
        <id>P06396</id>
    </interactant>
    <interactant intactId="EBI-25852289">
        <id>Q8NC67-2</id>
        <label>NETO2</label>
    </interactant>
    <organismsDiffer>false</organismsDiffer>
    <experiments>3</experiments>
</comment>
<comment type="interaction">
    <interactant intactId="EBI-351506">
        <id>P06396</id>
    </interactant>
    <interactant intactId="EBI-726369">
        <id>Q16621</id>
        <label>NFE2</label>
    </interactant>
    <organismsDiffer>false</organismsDiffer>
    <experiments>3</experiments>
</comment>
<comment type="interaction">
    <interactant intactId="EBI-351506">
        <id>P06396</id>
    </interactant>
    <interactant intactId="EBI-718372">
        <id>Q8N5V2</id>
        <label>NGEF</label>
    </interactant>
    <organismsDiffer>false</organismsDiffer>
    <experiments>3</experiments>
</comment>
<comment type="interaction">
    <interactant intactId="EBI-351506">
        <id>P06396</id>
    </interactant>
    <interactant intactId="EBI-6144053">
        <id>Q14995</id>
        <label>NR1D2</label>
    </interactant>
    <organismsDiffer>false</organismsDiffer>
    <experiments>3</experiments>
</comment>
<comment type="interaction">
    <interactant intactId="EBI-351506">
        <id>P06396</id>
    </interactant>
    <interactant intactId="EBI-10177172">
        <id>F1D8P7</id>
        <label>NR1H2</label>
    </interactant>
    <organismsDiffer>false</organismsDiffer>
    <experiments>3</experiments>
</comment>
<comment type="interaction">
    <interactant intactId="EBI-351506">
        <id>P06396</id>
    </interactant>
    <interactant intactId="EBI-2802743">
        <id>Q6PHZ7</id>
        <label>NR2C2</label>
    </interactant>
    <organismsDiffer>false</organismsDiffer>
    <experiments>3</experiments>
</comment>
<comment type="interaction">
    <interactant intactId="EBI-351506">
        <id>P06396</id>
    </interactant>
    <interactant intactId="EBI-2557388">
        <id>Q96MF7</id>
        <label>NSMCE2</label>
    </interactant>
    <organismsDiffer>false</organismsDiffer>
    <experiments>3</experiments>
</comment>
<comment type="interaction">
    <interactant intactId="EBI-351506">
        <id>P06396</id>
    </interactant>
    <interactant intactId="EBI-10490715">
        <id>Q4KMX9</id>
        <label>OBSCN</label>
    </interactant>
    <organismsDiffer>false</organismsDiffer>
    <experiments>3</experiments>
</comment>
<comment type="interaction">
    <interactant intactId="EBI-351506">
        <id>P06396</id>
    </interactant>
    <interactant intactId="EBI-8466445">
        <id>A5D8V7</id>
        <label>ODAD3</label>
    </interactant>
    <organismsDiffer>false</organismsDiffer>
    <experiments>3</experiments>
</comment>
<comment type="interaction">
    <interactant intactId="EBI-351506">
        <id>P06396</id>
    </interactant>
    <interactant intactId="EBI-25830200">
        <id>Q6GQQ9-2</id>
        <label>OTUD7B</label>
    </interactant>
    <organismsDiffer>false</organismsDiffer>
    <experiments>3</experiments>
</comment>
<comment type="interaction">
    <interactant intactId="EBI-351506">
        <id>P06396</id>
    </interactant>
    <interactant intactId="EBI-714785">
        <id>Q9H8K7</id>
        <label>PAAT</label>
    </interactant>
    <organismsDiffer>false</organismsDiffer>
    <experiments>3</experiments>
</comment>
<comment type="interaction">
    <interactant intactId="EBI-351506">
        <id>P06396</id>
    </interactant>
    <interactant intactId="EBI-2513978">
        <id>Q8N3R9</id>
        <label>PALS1</label>
    </interactant>
    <organismsDiffer>false</organismsDiffer>
    <experiments>3</experiments>
</comment>
<comment type="interaction">
    <interactant intactId="EBI-351506">
        <id>P06396</id>
    </interactant>
    <interactant intactId="EBI-17242559">
        <id>Q495U3</id>
        <label>PANX2</label>
    </interactant>
    <organismsDiffer>false</organismsDiffer>
    <experiments>3</experiments>
</comment>
<comment type="interaction">
    <interactant intactId="EBI-351506">
        <id>P06396</id>
    </interactant>
    <interactant intactId="EBI-17159452">
        <id>Q9NR21-5</id>
        <label>PARP11</label>
    </interactant>
    <organismsDiffer>false</organismsDiffer>
    <experiments>3</experiments>
</comment>
<comment type="interaction">
    <interactant intactId="EBI-351506">
        <id>P06396</id>
    </interactant>
    <interactant intactId="EBI-2557276">
        <id>O15534</id>
        <label>PER1</label>
    </interactant>
    <organismsDiffer>false</organismsDiffer>
    <experiments>3</experiments>
</comment>
<comment type="interaction">
    <interactant intactId="EBI-351506">
        <id>P06396</id>
    </interactant>
    <interactant intactId="EBI-722852">
        <id>Q9BUL5</id>
        <label>PHF23</label>
    </interactant>
    <organismsDiffer>false</organismsDiffer>
    <experiments>3</experiments>
</comment>
<comment type="interaction">
    <interactant intactId="EBI-351506">
        <id>P06396</id>
    </interactant>
    <interactant intactId="EBI-11028203">
        <id>Q03405-2</id>
        <label>PLAUR</label>
    </interactant>
    <organismsDiffer>false</organismsDiffer>
    <experiments>3</experiments>
</comment>
<comment type="interaction">
    <interactant intactId="EBI-351506">
        <id>P06396</id>
    </interactant>
    <interactant intactId="EBI-311059">
        <id>Q9UPR0</id>
        <label>PLCL2</label>
    </interactant>
    <organismsDiffer>false</organismsDiffer>
    <experiments>3</experiments>
</comment>
<comment type="interaction">
    <interactant intactId="EBI-351506">
        <id>P06396</id>
    </interactant>
    <interactant intactId="EBI-12891828">
        <id>Q6ZR37</id>
        <label>PLEKHG7</label>
    </interactant>
    <organismsDiffer>false</organismsDiffer>
    <experiments>3</experiments>
</comment>
<comment type="interaction">
    <interactant intactId="EBI-351506">
        <id>P06396</id>
    </interactant>
    <interactant intactId="EBI-26412802">
        <id>Q5SXH7-1</id>
        <label>PLEKHS1</label>
    </interactant>
    <organismsDiffer>false</organismsDiffer>
    <experiments>3</experiments>
</comment>
<comment type="interaction">
    <interactant intactId="EBI-351506">
        <id>P06396</id>
    </interactant>
    <interactant intactId="EBI-359498">
        <id>P0DPB6</id>
        <label>POLR1D</label>
    </interactant>
    <organismsDiffer>false</organismsDiffer>
    <experiments>3</experiments>
</comment>
<comment type="interaction">
    <interactant intactId="EBI-351506">
        <id>P06396</id>
    </interactant>
    <interactant intactId="EBI-355434">
        <id>Q9P1U0</id>
        <label>POLR1H</label>
    </interactant>
    <organismsDiffer>false</organismsDiffer>
    <experiments>3</experiments>
</comment>
<comment type="interaction">
    <interactant intactId="EBI-351506">
        <id>P06396</id>
    </interactant>
    <interactant intactId="EBI-78615">
        <id>Q07869</id>
        <label>PPARA</label>
    </interactant>
    <organismsDiffer>false</organismsDiffer>
    <experiments>3</experiments>
</comment>
<comment type="interaction">
    <interactant intactId="EBI-351506">
        <id>P06396</id>
    </interactant>
    <interactant intactId="EBI-591818">
        <id>Q9UNP9</id>
        <label>PPIE</label>
    </interactant>
    <organismsDiffer>false</organismsDiffer>
    <experiments>3</experiments>
</comment>
<comment type="interaction">
    <interactant intactId="EBI-351506">
        <id>P06396</id>
    </interactant>
    <interactant intactId="EBI-10700351">
        <id>O60237-2</id>
        <label>PPP1R12B</label>
    </interactant>
    <organismsDiffer>false</organismsDiffer>
    <experiments>3</experiments>
</comment>
<comment type="interaction">
    <interactant intactId="EBI-351506">
        <id>P06396</id>
    </interactant>
    <interactant intactId="EBI-710402">
        <id>Q96I34</id>
        <label>PPP1R16A</label>
    </interactant>
    <organismsDiffer>false</organismsDiffer>
    <experiments>3</experiments>
</comment>
<comment type="interaction">
    <interactant intactId="EBI-351506">
        <id>P06396</id>
    </interactant>
    <interactant intactId="EBI-25835994">
        <id>Q6ZMI0-5</id>
        <label>PPP1R21</label>
    </interactant>
    <organismsDiffer>false</organismsDiffer>
    <experiments>3</experiments>
</comment>
<comment type="interaction">
    <interactant intactId="EBI-351506">
        <id>P06396</id>
    </interactant>
    <interactant intactId="EBI-1053424">
        <id>O43741</id>
        <label>PRKAB2</label>
    </interactant>
    <organismsDiffer>false</organismsDiffer>
    <experiments>3</experiments>
</comment>
<comment type="interaction">
    <interactant intactId="EBI-351506">
        <id>P06396</id>
    </interactant>
    <interactant intactId="EBI-21251460">
        <id>O60260-5</id>
        <label>PRKN</label>
    </interactant>
    <organismsDiffer>false</organismsDiffer>
    <experiments>3</experiments>
</comment>
<comment type="interaction">
    <interactant intactId="EBI-351506">
        <id>P06396</id>
    </interactant>
    <interactant intactId="EBI-712149">
        <id>Q06323</id>
        <label>PSME1</label>
    </interactant>
    <organismsDiffer>false</organismsDiffer>
    <experiments>3</experiments>
</comment>
<comment type="interaction">
    <interactant intactId="EBI-351506">
        <id>P06396</id>
    </interactant>
    <interactant intactId="EBI-25835884">
        <id>Q8WUD1-2</id>
        <label>RAB2B</label>
    </interactant>
    <organismsDiffer>false</organismsDiffer>
    <experiments>3</experiments>
</comment>
<comment type="interaction">
    <interactant intactId="EBI-351506">
        <id>P06396</id>
    </interactant>
    <interactant intactId="EBI-12256104">
        <id>Q9UNT1-2</id>
        <label>RABL2B</label>
    </interactant>
    <organismsDiffer>false</organismsDiffer>
    <experiments>3</experiments>
</comment>
<comment type="interaction">
    <interactant intactId="EBI-351506">
        <id>P06396</id>
    </interactant>
    <interactant intactId="EBI-749285">
        <id>Q15311</id>
        <label>RALBP1</label>
    </interactant>
    <organismsDiffer>false</organismsDiffer>
    <experiments>3</experiments>
</comment>
<comment type="interaction">
    <interactant intactId="EBI-351506">
        <id>P06396</id>
    </interactant>
    <interactant intactId="EBI-9089733">
        <id>Q9HD47-3</id>
        <label>RANGRF</label>
    </interactant>
    <organismsDiffer>false</organismsDiffer>
    <experiments>3</experiments>
</comment>
<comment type="interaction">
    <interactant intactId="EBI-351506">
        <id>P06396</id>
    </interactant>
    <interactant intactId="EBI-12068216">
        <id>Q8TBY0</id>
        <label>RBM46</label>
    </interactant>
    <organismsDiffer>false</organismsDiffer>
    <experiments>3</experiments>
</comment>
<comment type="interaction">
    <interactant intactId="EBI-351506">
        <id>P06396</id>
    </interactant>
    <interactant intactId="EBI-1504830">
        <id>Q9P2K3-2</id>
        <label>RCOR3</label>
    </interactant>
    <organismsDiffer>false</organismsDiffer>
    <experiments>3</experiments>
</comment>
<comment type="interaction">
    <interactant intactId="EBI-351506">
        <id>P06396</id>
    </interactant>
    <interactant intactId="EBI-73886">
        <id>Q04206</id>
        <label>RELA</label>
    </interactant>
    <organismsDiffer>false</organismsDiffer>
    <experiments>3</experiments>
</comment>
<comment type="interaction">
    <interactant intactId="EBI-351506">
        <id>P06396</id>
    </interactant>
    <interactant intactId="EBI-25834767">
        <id>P47804-3</id>
        <label>RGR</label>
    </interactant>
    <organismsDiffer>false</organismsDiffer>
    <experiments>3</experiments>
</comment>
<comment type="interaction">
    <interactant intactId="EBI-351506">
        <id>P06396</id>
    </interactant>
    <interactant intactId="EBI-21890191">
        <id>Q8IXN7</id>
        <label>RIMKLA</label>
    </interactant>
    <organismsDiffer>false</organismsDiffer>
    <experiments>3</experiments>
</comment>
<comment type="interaction">
    <interactant intactId="EBI-351506">
        <id>P06396</id>
    </interactant>
    <interactant intactId="EBI-749039">
        <id>Q8WVD3</id>
        <label>RNF138</label>
    </interactant>
    <organismsDiffer>false</organismsDiffer>
    <experiments>3</experiments>
</comment>
<comment type="interaction">
    <interactant intactId="EBI-351506">
        <id>P06396</id>
    </interactant>
    <interactant intactId="EBI-1053664">
        <id>P62899</id>
        <label>RPL31</label>
    </interactant>
    <organismsDiffer>false</organismsDiffer>
    <experiments>3</experiments>
</comment>
<comment type="interaction">
    <interactant intactId="EBI-351506">
        <id>P06396</id>
    </interactant>
    <interactant intactId="EBI-347895">
        <id>P62244</id>
        <label>RPS15A</label>
    </interactant>
    <organismsDiffer>false</organismsDiffer>
    <experiments>3</experiments>
</comment>
<comment type="interaction">
    <interactant intactId="EBI-351506">
        <id>P06396</id>
    </interactant>
    <interactant intactId="EBI-354303">
        <id>P62701</id>
        <label>RPS4X</label>
    </interactant>
    <organismsDiffer>false</organismsDiffer>
    <experiments>3</experiments>
</comment>
<comment type="interaction">
    <interactant intactId="EBI-351506">
        <id>P06396</id>
    </interactant>
    <interactant intactId="EBI-10248967">
        <id>Q66K80</id>
        <label>RUSC1-AS1</label>
    </interactant>
    <organismsDiffer>false</organismsDiffer>
    <experiments>3</experiments>
</comment>
<comment type="interaction">
    <interactant intactId="EBI-351506">
        <id>P06396</id>
    </interactant>
    <interactant intactId="EBI-9089805">
        <id>Q9NTN9-3</id>
        <label>SEMA4G</label>
    </interactant>
    <organismsDiffer>false</organismsDiffer>
    <experiments>3</experiments>
</comment>
<comment type="interaction">
    <interactant intactId="EBI-351506">
        <id>P06396</id>
    </interactant>
    <interactant intactId="EBI-13292283">
        <id>Q9UHI5</id>
        <label>SLC7A8</label>
    </interactant>
    <organismsDiffer>false</organismsDiffer>
    <experiments>3</experiments>
</comment>
<comment type="interaction">
    <interactant intactId="EBI-351506">
        <id>P06396</id>
    </interactant>
    <interactant intactId="EBI-358419">
        <id>Q12824</id>
        <label>SMARCB1</label>
    </interactant>
    <organismsDiffer>false</organismsDiffer>
    <experiments>3</experiments>
</comment>
<comment type="interaction">
    <interactant intactId="EBI-351506">
        <id>P06396</id>
    </interactant>
    <interactant intactId="EBI-3929549">
        <id>O14544</id>
        <label>SOCS6</label>
    </interactant>
    <organismsDiffer>false</organismsDiffer>
    <experiments>3</experiments>
</comment>
<comment type="interaction">
    <interactant intactId="EBI-351506">
        <id>P06396</id>
    </interactant>
    <interactant intactId="EBI-9088579">
        <id>Q02086-2</id>
        <label>SP2</label>
    </interactant>
    <organismsDiffer>false</organismsDiffer>
    <experiments>3</experiments>
</comment>
<comment type="interaction">
    <interactant intactId="EBI-351506">
        <id>P06396</id>
    </interactant>
    <interactant intactId="EBI-10696971">
        <id>Q7Z6I5</id>
        <label>SPATA12</label>
    </interactant>
    <organismsDiffer>false</organismsDiffer>
    <experiments>3</experiments>
</comment>
<comment type="interaction">
    <interactant intactId="EBI-351506">
        <id>P06396</id>
    </interactant>
    <interactant intactId="EBI-12041693">
        <id>Q86W54-2</id>
        <label>SPATA24</label>
    </interactant>
    <organismsDiffer>false</organismsDiffer>
    <experiments>3</experiments>
</comment>
<comment type="interaction">
    <interactant intactId="EBI-351506">
        <id>P06396</id>
    </interactant>
    <interactant intactId="EBI-3923692">
        <id>Q496A3</id>
        <label>SPATS1</label>
    </interactant>
    <organismsDiffer>false</organismsDiffer>
    <experiments>3</experiments>
</comment>
<comment type="interaction">
    <interactant intactId="EBI-351506">
        <id>P06396</id>
    </interactant>
    <interactant intactId="EBI-751020">
        <id>Q9P2T0</id>
        <label>SPMAP2</label>
    </interactant>
    <organismsDiffer>false</organismsDiffer>
    <experiments>3</experiments>
</comment>
<comment type="interaction">
    <interactant intactId="EBI-351506">
        <id>P06396</id>
    </interactant>
    <interactant intactId="EBI-354861">
        <id>Q9C004</id>
        <label>SPRY4</label>
    </interactant>
    <organismsDiffer>false</organismsDiffer>
    <experiments>3</experiments>
</comment>
<comment type="interaction">
    <interactant intactId="EBI-351506">
        <id>P06396</id>
    </interactant>
    <interactant intactId="EBI-12408727">
        <id>Q5W111-2</id>
        <label>SPRYD7</label>
    </interactant>
    <organismsDiffer>false</organismsDiffer>
    <experiments>3</experiments>
</comment>
<comment type="interaction">
    <interactant intactId="EBI-351506">
        <id>P06396</id>
    </interactant>
    <interactant intactId="EBI-8484990">
        <id>Q8N4C7</id>
        <label>STX19</label>
    </interactant>
    <organismsDiffer>false</organismsDiffer>
    <experiments>3</experiments>
</comment>
<comment type="interaction">
    <interactant intactId="EBI-351506">
        <id>P06396</id>
    </interactant>
    <interactant intactId="EBI-15695297">
        <id>Q15814</id>
        <label>TBCC</label>
    </interactant>
    <organismsDiffer>false</organismsDiffer>
    <experiments>3</experiments>
</comment>
<comment type="interaction">
    <interactant intactId="EBI-351506">
        <id>P06396</id>
    </interactant>
    <interactant intactId="EBI-954089">
        <id>O15273</id>
        <label>TCAP</label>
    </interactant>
    <organismsDiffer>false</organismsDiffer>
    <experiments>3</experiments>
</comment>
<comment type="interaction">
    <interactant intactId="EBI-351506">
        <id>P06396</id>
    </interactant>
    <interactant intactId="EBI-752030">
        <id>Q96A09</id>
        <label>TENT5B</label>
    </interactant>
    <organismsDiffer>false</organismsDiffer>
    <experiments>3</experiments>
</comment>
<comment type="interaction">
    <interactant intactId="EBI-351506">
        <id>P06396</id>
    </interactant>
    <interactant intactId="EBI-711018">
        <id>P54274-2</id>
        <label>TERF1</label>
    </interactant>
    <organismsDiffer>false</organismsDiffer>
    <experiments>3</experiments>
</comment>
<comment type="interaction">
    <interactant intactId="EBI-351506">
        <id>P06396</id>
    </interactant>
    <interactant intactId="EBI-310727">
        <id>Q6N021</id>
        <label>TET2</label>
    </interactant>
    <organismsDiffer>false</organismsDiffer>
    <experiments>3</experiments>
</comment>
<comment type="interaction">
    <interactant intactId="EBI-351506">
        <id>P06396</id>
    </interactant>
    <interactant intactId="EBI-12833746">
        <id>Q5T0J7-2</id>
        <label>TEX35</label>
    </interactant>
    <organismsDiffer>false</organismsDiffer>
    <experiments>3</experiments>
</comment>
<comment type="interaction">
    <interactant intactId="EBI-351506">
        <id>P06396</id>
    </interactant>
    <interactant intactId="EBI-2372529">
        <id>O60830</id>
        <label>TIMM17B</label>
    </interactant>
    <organismsDiffer>false</organismsDiffer>
    <experiments>3</experiments>
</comment>
<comment type="interaction">
    <interactant intactId="EBI-351506">
        <id>P06396</id>
    </interactant>
    <interactant intactId="EBI-25852210">
        <id>Q9BZW5-2</id>
        <label>TM6SF1</label>
    </interactant>
    <organismsDiffer>false</organismsDiffer>
    <experiments>3</experiments>
</comment>
<comment type="interaction">
    <interactant intactId="EBI-351506">
        <id>P06396</id>
    </interactant>
    <interactant intactId="EBI-25830583">
        <id>Q8N0U2</id>
        <label>TMEM61</label>
    </interactant>
    <organismsDiffer>false</organismsDiffer>
    <experiments>3</experiments>
</comment>
<comment type="interaction">
    <interactant intactId="EBI-351506">
        <id>P06396</id>
    </interactant>
    <interactant intactId="EBI-10242677">
        <id>Q53NU3</id>
        <label>tmp_locus_54</label>
    </interactant>
    <organismsDiffer>false</organismsDiffer>
    <experiments>3</experiments>
</comment>
<comment type="interaction">
    <interactant intactId="EBI-351506">
        <id>P06396</id>
    </interactant>
    <interactant intactId="EBI-1390168">
        <id>Q9H8H3</id>
        <label>TMT1A</label>
    </interactant>
    <organismsDiffer>false</organismsDiffer>
    <experiments>3</experiments>
</comment>
<comment type="interaction">
    <interactant intactId="EBI-351506">
        <id>P06396</id>
    </interactant>
    <interactant intactId="EBI-9089156">
        <id>Q8IUR5-4</id>
        <label>TMTC1</label>
    </interactant>
    <organismsDiffer>false</organismsDiffer>
    <experiments>3</experiments>
</comment>
<comment type="interaction">
    <interactant intactId="EBI-351506">
        <id>P06396</id>
    </interactant>
    <interactant intactId="EBI-25831574">
        <id>Q71RG4-4</id>
        <label>TMUB2</label>
    </interactant>
    <organismsDiffer>false</organismsDiffer>
    <experiments>3</experiments>
</comment>
<comment type="interaction">
    <interactant intactId="EBI-351506">
        <id>P06396</id>
    </interactant>
    <interactant intactId="EBI-723281">
        <id>P50616</id>
        <label>TOB1</label>
    </interactant>
    <organismsDiffer>false</organismsDiffer>
    <experiments>3</experiments>
</comment>
<comment type="interaction">
    <interactant intactId="EBI-351506">
        <id>P06396</id>
    </interactant>
    <interactant intactId="EBI-2510146">
        <id>Q9H496</id>
        <label>TOR1AIP2</label>
    </interactant>
    <organismsDiffer>false</organismsDiffer>
    <experiments>3</experiments>
</comment>
<comment type="interaction">
    <interactant intactId="EBI-351506">
        <id>P06396</id>
    </interactant>
    <interactant intactId="EBI-740098">
        <id>P36406</id>
        <label>TRIM23</label>
    </interactant>
    <organismsDiffer>false</organismsDiffer>
    <experiments>3</experiments>
</comment>
<comment type="interaction">
    <interactant intactId="EBI-351506">
        <id>P06396</id>
    </interactant>
    <interactant intactId="EBI-11525489">
        <id>Q86WT6-2</id>
        <label>TRIM69</label>
    </interactant>
    <organismsDiffer>false</organismsDiffer>
    <experiments>3</experiments>
</comment>
<comment type="interaction">
    <interactant intactId="EBI-351506">
        <id>P06396</id>
    </interactant>
    <interactant intactId="EBI-21353855">
        <id>Q99598</id>
        <label>TSNAX</label>
    </interactant>
    <organismsDiffer>false</organismsDiffer>
    <experiments>3</experiments>
</comment>
<comment type="interaction">
    <interactant intactId="EBI-351506">
        <id>P06396</id>
    </interactant>
    <interactant intactId="EBI-3914288">
        <id>O60636</id>
        <label>TSPAN2</label>
    </interactant>
    <organismsDiffer>false</organismsDiffer>
    <experiments>3</experiments>
</comment>
<comment type="interaction">
    <interactant intactId="EBI-351506">
        <id>P06396</id>
    </interactant>
    <interactant intactId="EBI-2339348">
        <id>P49459</id>
        <label>UBE2A</label>
    </interactant>
    <organismsDiffer>false</organismsDiffer>
    <experiments>3</experiments>
</comment>
<comment type="interaction">
    <interactant intactId="EBI-351506">
        <id>P06396</id>
    </interactant>
    <interactant intactId="EBI-1050671">
        <id>Q13404</id>
        <label>UBE2V1</label>
    </interactant>
    <organismsDiffer>false</organismsDiffer>
    <experiments>3</experiments>
</comment>
<comment type="interaction">
    <interactant intactId="EBI-351506">
        <id>P06396</id>
    </interactant>
    <interactant intactId="EBI-16434682">
        <id>Q9HA47-2</id>
        <label>UCK1</label>
    </interactant>
    <organismsDiffer>false</organismsDiffer>
    <experiments>3</experiments>
</comment>
<comment type="interaction">
    <interactant intactId="EBI-351506">
        <id>P06396</id>
    </interactant>
    <interactant intactId="EBI-373380">
        <id>Q9H270</id>
        <label>VPS11</label>
    </interactant>
    <organismsDiffer>false</organismsDiffer>
    <experiments>3</experiments>
</comment>
<comment type="interaction">
    <interactant intactId="EBI-351506">
        <id>P06396</id>
    </interactant>
    <interactant intactId="EBI-2850578">
        <id>Q8NEZ2</id>
        <label>VPS37A</label>
    </interactant>
    <organismsDiffer>false</organismsDiffer>
    <experiments>3</experiments>
</comment>
<comment type="interaction">
    <interactant intactId="EBI-351506">
        <id>P06396</id>
    </interactant>
    <interactant intactId="EBI-25835297">
        <id>Q9P1Q0-4</id>
        <label>VPS54</label>
    </interactant>
    <organismsDiffer>false</organismsDiffer>
    <experiments>3</experiments>
</comment>
<comment type="interaction">
    <interactant intactId="EBI-351506">
        <id>P06396</id>
    </interactant>
    <interactant intactId="EBI-10316321">
        <id>Q9NX94</id>
        <label>WBP1L</label>
    </interactant>
    <organismsDiffer>false</organismsDiffer>
    <experiments>3</experiments>
</comment>
<comment type="interaction">
    <interactant intactId="EBI-351506">
        <id>P06396</id>
    </interactant>
    <interactant intactId="EBI-9089370">
        <id>Q8TBZ3-3</id>
        <label>WDR20</label>
    </interactant>
    <organismsDiffer>false</organismsDiffer>
    <experiments>3</experiments>
</comment>
<comment type="interaction">
    <interactant intactId="EBI-351506">
        <id>P06396</id>
    </interactant>
    <interactant intactId="EBI-727198">
        <id>O00755</id>
        <label>WNT7A</label>
    </interactant>
    <organismsDiffer>false</organismsDiffer>
    <experiments>3</experiments>
</comment>
<comment type="interaction">
    <interactant intactId="EBI-351506">
        <id>P06396</id>
    </interactant>
    <interactant intactId="EBI-10176632">
        <id>O43829</id>
        <label>ZBTB14</label>
    </interactant>
    <organismsDiffer>false</organismsDiffer>
    <experiments>3</experiments>
</comment>
<comment type="interaction">
    <interactant intactId="EBI-351506">
        <id>P06396</id>
    </interactant>
    <interactant intactId="EBI-746345">
        <id>Q9NP64</id>
        <label>ZCCHC17</label>
    </interactant>
    <organismsDiffer>false</organismsDiffer>
    <experiments>3</experiments>
</comment>
<comment type="interaction">
    <interactant intactId="EBI-351506">
        <id>P06396</id>
    </interactant>
    <interactant intactId="EBI-25835852">
        <id>Q96JL9-2</id>
        <label>ZNF333</label>
    </interactant>
    <organismsDiffer>false</organismsDiffer>
    <experiments>3</experiments>
</comment>
<comment type="interaction">
    <interactant intactId="EBI-351506">
        <id>P06396</id>
    </interactant>
    <interactant intactId="EBI-8489702">
        <id>Q9C0F3</id>
        <label>ZNF436</label>
    </interactant>
    <organismsDiffer>false</organismsDiffer>
    <experiments>3</experiments>
</comment>
<comment type="interaction">
    <interactant intactId="EBI-351506">
        <id>P06396</id>
    </interactant>
    <interactant intactId="EBI-745520">
        <id>Q9P0T4</id>
        <label>ZNF581</label>
    </interactant>
    <organismsDiffer>false</organismsDiffer>
    <experiments>3</experiments>
</comment>
<comment type="interaction">
    <interactant intactId="EBI-351506">
        <id>P06396</id>
    </interactant>
    <interactant intactId="EBI-18036029">
        <id>Q3KNS6-3</id>
        <label>ZNF829</label>
    </interactant>
    <organismsDiffer>false</organismsDiffer>
    <experiments>3</experiments>
</comment>
<comment type="interaction">
    <interactant intactId="EBI-351506">
        <id>P06396</id>
    </interactant>
    <interactant intactId="EBI-25863917">
        <id>B7ZVW5</id>
    </interactant>
    <organismsDiffer>false</organismsDiffer>
    <experiments>3</experiments>
</comment>
<comment type="interaction">
    <interactant intactId="EBI-351506">
        <id>P06396</id>
    </interactant>
    <interactant intactId="EBI-25831943">
        <id>Q7L8T7</id>
    </interactant>
    <organismsDiffer>false</organismsDiffer>
    <experiments>3</experiments>
</comment>
<comment type="interaction">
    <interactant intactId="EBI-351506">
        <id>P06396</id>
    </interactant>
    <interactant intactId="EBI-7195234">
        <id>P07830</id>
        <label>act21</label>
    </interactant>
    <organismsDiffer>true</organismsDiffer>
    <experiments>4</experiments>
</comment>
<comment type="interaction">
    <interactant intactId="EBI-351506">
        <id>P06396</id>
    </interactant>
    <interactant intactId="EBI-367540">
        <id>P68135</id>
        <label>ACTA1</label>
    </interactant>
    <organismsDiffer>true</organismsDiffer>
    <experiments>10</experiments>
</comment>
<comment type="subcellular location">
    <molecule>Isoform 2</molecule>
    <subcellularLocation>
        <location>Cytoplasm</location>
        <location>Cytoskeleton</location>
    </subcellularLocation>
</comment>
<comment type="subcellular location">
    <molecule>Isoform 1</molecule>
    <subcellularLocation>
        <location>Secreted</location>
    </subcellularLocation>
</comment>
<comment type="alternative products">
    <event type="alternative splicing"/>
    <event type="alternative initiation"/>
    <isoform>
        <id>P06396-1</id>
        <name>1</name>
        <name>Secreted</name>
        <name>Plasma</name>
        <sequence type="displayed"/>
    </isoform>
    <isoform>
        <id>P06396-2</id>
        <name>2</name>
        <name>Cytoplasmic</name>
        <sequence type="described" ref="VSP_018959"/>
    </isoform>
    <isoform>
        <id>P06396-3</id>
        <name>3</name>
        <sequence type="described" ref="VSP_042879"/>
    </isoform>
    <isoform>
        <id>P06396-4</id>
        <name>4</name>
        <sequence type="described" ref="VSP_054791"/>
    </isoform>
</comment>
<comment type="tissue specificity">
    <text>Phagocytic cells, platelets, fibroblasts, nonmuscle cells, smooth and skeletal muscle cells.</text>
</comment>
<comment type="domain">
    <text evidence="6 10 18">Comprises six structurally related gelsolin-like (G1-G6) domains, that, in a calcium-free environment, are packed together to form a compact globular structure in which the putative actin-binding sequences are not sufficiently exposed to enable binding to occur (PubMed:19666512). Binding calcium may release the connections that join the N- and C-terminal halves of gelsolin, enabling each half to bind actin relatively independently (PubMed:12460571, PubMed:19666512). G1 and G4 bind two Ca(2+) in a type I and in a type II manner (PubMed:12460571, PubMed:19666512). G2, G3, G5 and G6 bind only one Ca(2+) in a type II manner (PubMed:12460571, PubMed:19666512). Type I Ca(2+) binding sites are shared between actin and gelsolin-like repeats G1 and G4 (PubMed:12460571, PubMed:19666512). Type I binding governs the strength of interactions between gelsolin and actin by direct participation at the binding interface (PubMed:12460571, PubMed:19666512). Ca(2+) binding to G2 and G6 disrupts the interactions between G2 and G6, releases the C-terminal tail, and induces large interdomain rearrangements that result in the exposure of the F-actin-binding site on G2 and contributes to the activation of gelsolin (PubMed:12460571, PubMed:19666512). Binding to phosphoinositides may inhibit the severing and capping properties of gelsolin (Probable).</text>
</comment>
<comment type="PTM">
    <text evidence="5">Phosphorylation on Tyr-86, Tyr-409, Tyr-465, Tyr-603 and Tyr-651 in vitro is induced in presence of phospholipids.</text>
</comment>
<comment type="disease" evidence="7 10 12">
    <disease id="DI-00101">
        <name>Amyloidosis, hereditary systemic 4, Finnish type</name>
        <acronym>AMYLD4</acronym>
        <description>A form of hereditary systemic amyloidosis, a disorder characterized by amyloid deposition in multiple tissues resulting in a wide clinical spectrum. AMYLD4 is due to gelsolin amyloid deposition and is typically characterized by cranial neuropathy and lattice corneal dystrophy. Most patients have modest involvement of internal organs, but severe systemic disease can develop in some individuals causing peripheral polyneuropathy, amyloid cardiomyopathy, and nephrotic syndrome leading to renal failure. AMYLD4 is usually inherited in an autosomal dominant pattern. However, homozygotes with a more severe phenotype have also been reported.</description>
        <dbReference type="MIM" id="105120"/>
    </disease>
    <text>The disease is caused by variants affecting the gene represented in this entry.</text>
</comment>
<comment type="similarity">
    <text evidence="17">Belongs to the villin/gelsolin family.</text>
</comment>
<comment type="online information" name="Wikipedia">
    <link uri="https://en.wikipedia.org/wiki/Gelsolin"/>
    <text>Gelsolin entry</text>
</comment>